<sequence>MATEEKKPETEAARAQPTPSSSATQSKPTPVKPNYALKFTLAGHTKAVSSVKFSPNGEWLASSSADKLIKIWGAYDGKFEKTISGHKLGISDVAWSSDSNLLVSASDDKTLKIWDVSSGKCLKTLKGHSNYVFCCNFNPQSNLIVSGSFDESVRIWDVKTGKCLKTLPAHSDPVSAVHFNRDGSLIVSSSYDGLCRIWDTASGQCLKTLIDDDNPPVSFVKFSPNGKYILAATLDNTLKLWDYSKGKCLKTYTGHKNEKYCIFANFSVTGGKWIVSGSEDNLVYIWNLQTKEIVQKLQGHTDVVISTACHPTENIIASAALENDKTIKLWKSDC</sequence>
<gene>
    <name type="primary">WDR5</name>
    <name type="synonym">BIG3</name>
</gene>
<proteinExistence type="evidence at protein level"/>
<evidence type="ECO:0000250" key="1">
    <source>
        <dbReference type="UniProtKB" id="P61965"/>
    </source>
</evidence>
<evidence type="ECO:0000250" key="2">
    <source>
        <dbReference type="UniProtKB" id="Q498M4"/>
    </source>
</evidence>
<evidence type="ECO:0000256" key="3">
    <source>
        <dbReference type="SAM" id="MobiDB-lite"/>
    </source>
</evidence>
<evidence type="ECO:0000269" key="4">
    <source>
    </source>
</evidence>
<evidence type="ECO:0000269" key="5">
    <source>
    </source>
</evidence>
<evidence type="ECO:0000269" key="6">
    <source>
    </source>
</evidence>
<evidence type="ECO:0000269" key="7">
    <source>
    </source>
</evidence>
<evidence type="ECO:0000269" key="8">
    <source>
    </source>
</evidence>
<evidence type="ECO:0000269" key="9">
    <source>
    </source>
</evidence>
<evidence type="ECO:0000269" key="10">
    <source>
    </source>
</evidence>
<evidence type="ECO:0000269" key="11">
    <source>
    </source>
</evidence>
<evidence type="ECO:0000269" key="12">
    <source>
    </source>
</evidence>
<evidence type="ECO:0000269" key="13">
    <source>
    </source>
</evidence>
<evidence type="ECO:0000269" key="14">
    <source>
    </source>
</evidence>
<evidence type="ECO:0000269" key="15">
    <source>
    </source>
</evidence>
<evidence type="ECO:0000269" key="16">
    <source>
    </source>
</evidence>
<evidence type="ECO:0000269" key="17">
    <source>
    </source>
</evidence>
<evidence type="ECO:0000269" key="18">
    <source>
    </source>
</evidence>
<evidence type="ECO:0000269" key="19">
    <source>
    </source>
</evidence>
<evidence type="ECO:0000269" key="20">
    <source>
    </source>
</evidence>
<evidence type="ECO:0000269" key="21">
    <source>
    </source>
</evidence>
<evidence type="ECO:0000269" key="22">
    <source>
    </source>
</evidence>
<evidence type="ECO:0000269" key="23">
    <source>
    </source>
</evidence>
<evidence type="ECO:0000269" key="24">
    <source>
    </source>
</evidence>
<evidence type="ECO:0000269" key="25">
    <source>
    </source>
</evidence>
<evidence type="ECO:0000269" key="26">
    <source>
    </source>
</evidence>
<evidence type="ECO:0000269" key="27">
    <source>
    </source>
</evidence>
<evidence type="ECO:0000269" key="28">
    <source>
    </source>
</evidence>
<evidence type="ECO:0000269" key="29">
    <source>
    </source>
</evidence>
<evidence type="ECO:0000269" key="30">
    <source>
    </source>
</evidence>
<evidence type="ECO:0000305" key="31"/>
<evidence type="ECO:0007744" key="32">
    <source>
        <dbReference type="PDB" id="3EMH"/>
    </source>
</evidence>
<evidence type="ECO:0007744" key="33">
    <source>
        <dbReference type="PDB" id="3P4F"/>
    </source>
</evidence>
<evidence type="ECO:0007744" key="34">
    <source>
        <dbReference type="PDB" id="3UVK"/>
    </source>
</evidence>
<evidence type="ECO:0007744" key="35">
    <source>
        <dbReference type="PDB" id="3UVL"/>
    </source>
</evidence>
<evidence type="ECO:0007744" key="36">
    <source>
        <dbReference type="PDB" id="3UVM"/>
    </source>
</evidence>
<evidence type="ECO:0007744" key="37">
    <source>
        <dbReference type="PDB" id="3UVN"/>
    </source>
</evidence>
<evidence type="ECO:0007744" key="38">
    <source>
        <dbReference type="PDB" id="3UVO"/>
    </source>
</evidence>
<evidence type="ECO:0007744" key="39">
    <source>
        <dbReference type="PDB" id="4ERQ"/>
    </source>
</evidence>
<evidence type="ECO:0007744" key="40">
    <source>
        <dbReference type="PDB" id="4ERY"/>
    </source>
</evidence>
<evidence type="ECO:0007744" key="41">
    <source>
        <dbReference type="PDB" id="4ERZ"/>
    </source>
</evidence>
<evidence type="ECO:0007744" key="42">
    <source>
        <dbReference type="PDB" id="4ES0"/>
    </source>
</evidence>
<evidence type="ECO:0007744" key="43">
    <source>
        <dbReference type="PDB" id="4ESG"/>
    </source>
</evidence>
<evidence type="ECO:0007744" key="44">
    <source>
        <dbReference type="PDB" id="4EWR"/>
    </source>
</evidence>
<evidence type="ECO:0007744" key="45">
    <source>
    </source>
</evidence>
<evidence type="ECO:0007744" key="46">
    <source>
    </source>
</evidence>
<evidence type="ECO:0007744" key="47">
    <source>
    </source>
</evidence>
<evidence type="ECO:0007829" key="48">
    <source>
        <dbReference type="PDB" id="2G9A"/>
    </source>
</evidence>
<evidence type="ECO:0007829" key="49">
    <source>
        <dbReference type="PDB" id="5EAP"/>
    </source>
</evidence>
<evidence type="ECO:0007829" key="50">
    <source>
        <dbReference type="PDB" id="6E1Z"/>
    </source>
</evidence>
<evidence type="ECO:0007829" key="51">
    <source>
        <dbReference type="PDB" id="7BED"/>
    </source>
</evidence>
<evidence type="ECO:0007829" key="52">
    <source>
        <dbReference type="PDB" id="8Q1N"/>
    </source>
</evidence>
<feature type="initiator methionine" description="Removed" evidence="46">
    <location>
        <position position="1"/>
    </location>
</feature>
<feature type="chain" id="PRO_0000051350" description="WD repeat-containing protein 5">
    <location>
        <begin position="2"/>
        <end position="334"/>
    </location>
</feature>
<feature type="repeat" description="WD 1">
    <location>
        <begin position="43"/>
        <end position="82"/>
    </location>
</feature>
<feature type="repeat" description="WD 2">
    <location>
        <begin position="85"/>
        <end position="126"/>
    </location>
</feature>
<feature type="repeat" description="WD 3">
    <location>
        <begin position="128"/>
        <end position="168"/>
    </location>
</feature>
<feature type="repeat" description="WD 4">
    <location>
        <begin position="169"/>
        <end position="208"/>
    </location>
</feature>
<feature type="repeat" description="WD 5">
    <location>
        <begin position="212"/>
        <end position="253"/>
    </location>
</feature>
<feature type="repeat" description="WD 6">
    <location>
        <begin position="256"/>
        <end position="296"/>
    </location>
</feature>
<feature type="repeat" description="WD 7">
    <location>
        <begin position="299"/>
        <end position="333"/>
    </location>
</feature>
<feature type="region of interest" description="Disordered" evidence="3">
    <location>
        <begin position="1"/>
        <end position="31"/>
    </location>
</feature>
<feature type="compositionally biased region" description="Basic and acidic residues" evidence="3">
    <location>
        <begin position="1"/>
        <end position="12"/>
    </location>
</feature>
<feature type="compositionally biased region" description="Polar residues" evidence="3">
    <location>
        <begin position="17"/>
        <end position="28"/>
    </location>
</feature>
<feature type="site" description="Important for interaction with histone H3">
    <location>
        <position position="107"/>
    </location>
</feature>
<feature type="site" description="Important for interaction with histone H3">
    <location>
        <position position="133"/>
    </location>
</feature>
<feature type="site" description="Important for interaction with histone H3">
    <location>
        <position position="263"/>
    </location>
</feature>
<feature type="site" description="Important for interaction with histone H3">
    <location>
        <position position="322"/>
    </location>
</feature>
<feature type="modified residue" description="N-acetylalanine" evidence="46">
    <location>
        <position position="2"/>
    </location>
</feature>
<feature type="modified residue" description="N6-acetyllysine" evidence="45">
    <location>
        <position position="112"/>
    </location>
</feature>
<feature type="cross-link" description="Glycyl lysine isopeptide (Lys-Gly) (interchain with G-Cter in SUMO2)" evidence="47">
    <location>
        <position position="7"/>
    </location>
</feature>
<feature type="cross-link" description="Glycyl lysine isopeptide (Lys-Gly) (interchain with G-Cter in SUMO2)" evidence="47">
    <location>
        <position position="27"/>
    </location>
</feature>
<feature type="cross-link" description="Glycyl lysine isopeptide (Lys-Gly) (interchain with G-Cter in SUMO2)" evidence="47">
    <location>
        <position position="46"/>
    </location>
</feature>
<feature type="sequence variant" id="VAR_081531" description="Found in a patient with childhood apraxia of speech; uncertain significance." evidence="29">
    <original>T</original>
    <variation>M</variation>
    <location>
        <position position="208"/>
    </location>
</feature>
<feature type="mutagenesis site" description="Strongly reduced affinity for histone H3." evidence="9">
    <original>A</original>
    <variation>E</variation>
    <location>
        <position position="47"/>
    </location>
</feature>
<feature type="mutagenesis site" description="Strongly reduced affinity for histone H3." evidence="9">
    <original>S</original>
    <variation>F</variation>
    <location>
        <position position="91"/>
    </location>
</feature>
<feature type="mutagenesis site" description="Strongly reduced affinity for histone H3. Significant decrease in interaction with KMT2A." evidence="9 11 20">
    <original>D</original>
    <variation>A</variation>
    <location>
        <position position="107"/>
    </location>
</feature>
<feature type="mutagenesis site" description="Strongly reduced affinity for histone H3." evidence="11">
    <original>D</original>
    <variation>N</variation>
    <location>
        <position position="107"/>
    </location>
</feature>
<feature type="mutagenesis site" description="Strongly reduced affinity for histone H3. Significant decrease in interaction with KMT2A." evidence="11 20">
    <original>F</original>
    <variation>A</variation>
    <location>
        <position position="133"/>
    </location>
</feature>
<feature type="mutagenesis site" description="Strongly reduced affinity for histone H3." evidence="9">
    <original>F</original>
    <variation>D</variation>
    <location>
        <position position="133"/>
    </location>
</feature>
<feature type="mutagenesis site" description="Strongly reduced affinity for histone H3." evidence="11">
    <original>F</original>
    <variation>L</variation>
    <location>
        <position position="133"/>
    </location>
</feature>
<feature type="mutagenesis site" description="Significant decrease in interaction with KMT2A." evidence="20">
    <original>F</original>
    <variation>A</variation>
    <location>
        <position position="149"/>
    </location>
</feature>
<feature type="mutagenesis site" description="Loss of interaction with RBBP5 and reduced ability to stimulate KMT2A methyltransferase activity in association with RBBP5 and ASH2L." evidence="25">
    <original>N</original>
    <variation>A</variation>
    <location>
        <position position="225"/>
    </location>
</feature>
<feature type="mutagenesis site" description="Loss of interaction with RBBP5 and reduced ability to stimulate KMT2A methyltransferase activity in association with RBBP5 and ASH2L." evidence="25">
    <original>L</original>
    <variation>K</variation>
    <location>
        <position position="240"/>
    </location>
</feature>
<feature type="mutagenesis site" description="Strongly reduced affinity for histone H3. Significant decrease in interaction with KMT2A." evidence="11 20">
    <original>F</original>
    <variation>A</variation>
    <location>
        <position position="263"/>
    </location>
</feature>
<feature type="mutagenesis site" description="Strongly reduced affinity for histone H3." evidence="11">
    <original>F</original>
    <variation>W</variation>
    <location>
        <position position="263"/>
    </location>
</feature>
<feature type="mutagenesis site" description="Reduced interaction with RBBP5 and reduced ability to stimulate KMT2A methyltransferase activity in association with RBBP5 and ASH2L." evidence="25">
    <original>Q</original>
    <variation>A</variation>
    <location>
        <position position="289"/>
    </location>
</feature>
<feature type="mutagenesis site" description="Abolishes histone H3 binding." evidence="11">
    <original>L</original>
    <variation>A</variation>
    <location>
        <position position="321"/>
    </location>
</feature>
<feature type="mutagenesis site" description="Strongly reduced affinity for histone H3. No effect on interaction with KMT2A." evidence="9 20">
    <original>E</original>
    <variation>A</variation>
    <location>
        <position position="322"/>
    </location>
</feature>
<feature type="helix" evidence="51">
    <location>
        <begin position="13"/>
        <end position="15"/>
    </location>
</feature>
<feature type="strand" evidence="49">
    <location>
        <begin position="25"/>
        <end position="27"/>
    </location>
</feature>
<feature type="strand" evidence="52">
    <location>
        <begin position="31"/>
        <end position="33"/>
    </location>
</feature>
<feature type="strand" evidence="50">
    <location>
        <begin position="36"/>
        <end position="41"/>
    </location>
</feature>
<feature type="strand" evidence="50">
    <location>
        <begin position="48"/>
        <end position="53"/>
    </location>
</feature>
<feature type="strand" evidence="50">
    <location>
        <begin position="57"/>
        <end position="64"/>
    </location>
</feature>
<feature type="strand" evidence="50">
    <location>
        <begin position="67"/>
        <end position="73"/>
    </location>
</feature>
<feature type="turn" evidence="50">
    <location>
        <begin position="74"/>
        <end position="76"/>
    </location>
</feature>
<feature type="strand" evidence="50">
    <location>
        <begin position="79"/>
        <end position="84"/>
    </location>
</feature>
<feature type="strand" evidence="50">
    <location>
        <begin position="90"/>
        <end position="95"/>
    </location>
</feature>
<feature type="strand" evidence="50">
    <location>
        <begin position="99"/>
        <end position="106"/>
    </location>
</feature>
<feature type="strand" evidence="50">
    <location>
        <begin position="109"/>
        <end position="115"/>
    </location>
</feature>
<feature type="turn" evidence="50">
    <location>
        <begin position="116"/>
        <end position="118"/>
    </location>
</feature>
<feature type="strand" evidence="50">
    <location>
        <begin position="121"/>
        <end position="126"/>
    </location>
</feature>
<feature type="strand" evidence="50">
    <location>
        <begin position="132"/>
        <end position="137"/>
    </location>
</feature>
<feature type="strand" evidence="50">
    <location>
        <begin position="141"/>
        <end position="148"/>
    </location>
</feature>
<feature type="strand" evidence="50">
    <location>
        <begin position="153"/>
        <end position="157"/>
    </location>
</feature>
<feature type="turn" evidence="50">
    <location>
        <begin position="158"/>
        <end position="160"/>
    </location>
</feature>
<feature type="strand" evidence="50">
    <location>
        <begin position="163"/>
        <end position="167"/>
    </location>
</feature>
<feature type="strand" evidence="50">
    <location>
        <begin position="174"/>
        <end position="179"/>
    </location>
</feature>
<feature type="strand" evidence="50">
    <location>
        <begin position="183"/>
        <end position="190"/>
    </location>
</feature>
<feature type="strand" evidence="50">
    <location>
        <begin position="193"/>
        <end position="199"/>
    </location>
</feature>
<feature type="turn" evidence="50">
    <location>
        <begin position="200"/>
        <end position="202"/>
    </location>
</feature>
<feature type="strand" evidence="50">
    <location>
        <begin position="205"/>
        <end position="211"/>
    </location>
</feature>
<feature type="strand" evidence="50">
    <location>
        <begin position="213"/>
        <end position="215"/>
    </location>
</feature>
<feature type="strand" evidence="50">
    <location>
        <begin position="217"/>
        <end position="222"/>
    </location>
</feature>
<feature type="strand" evidence="50">
    <location>
        <begin position="226"/>
        <end position="233"/>
    </location>
</feature>
<feature type="turn" evidence="50">
    <location>
        <begin position="234"/>
        <end position="236"/>
    </location>
</feature>
<feature type="strand" evidence="50">
    <location>
        <begin position="237"/>
        <end position="242"/>
    </location>
</feature>
<feature type="turn" evidence="50">
    <location>
        <begin position="243"/>
        <end position="246"/>
    </location>
</feature>
<feature type="strand" evidence="50">
    <location>
        <begin position="247"/>
        <end position="252"/>
    </location>
</feature>
<feature type="strand" evidence="50">
    <location>
        <begin position="258"/>
        <end position="260"/>
    </location>
</feature>
<feature type="strand" evidence="50">
    <location>
        <begin position="264"/>
        <end position="267"/>
    </location>
</feature>
<feature type="strand" evidence="50">
    <location>
        <begin position="269"/>
        <end position="271"/>
    </location>
</feature>
<feature type="strand" evidence="50">
    <location>
        <begin position="273"/>
        <end position="276"/>
    </location>
</feature>
<feature type="strand" evidence="48">
    <location>
        <begin position="279"/>
        <end position="281"/>
    </location>
</feature>
<feature type="strand" evidence="50">
    <location>
        <begin position="283"/>
        <end position="287"/>
    </location>
</feature>
<feature type="turn" evidence="50">
    <location>
        <begin position="288"/>
        <end position="290"/>
    </location>
</feature>
<feature type="strand" evidence="50">
    <location>
        <begin position="293"/>
        <end position="297"/>
    </location>
</feature>
<feature type="strand" evidence="50">
    <location>
        <begin position="304"/>
        <end position="309"/>
    </location>
</feature>
<feature type="strand" evidence="50">
    <location>
        <begin position="311"/>
        <end position="320"/>
    </location>
</feature>
<feature type="turn" evidence="50">
    <location>
        <begin position="322"/>
        <end position="324"/>
    </location>
</feature>
<feature type="strand" evidence="50">
    <location>
        <begin position="327"/>
        <end position="331"/>
    </location>
</feature>
<dbReference type="EMBL" id="AJ011376">
    <property type="protein sequence ID" value="CAB66159.1"/>
    <property type="status" value="ALT_INIT"/>
    <property type="molecule type" value="mRNA"/>
</dbReference>
<dbReference type="EMBL" id="AK000552">
    <property type="protein sequence ID" value="BAA91248.1"/>
    <property type="molecule type" value="mRNA"/>
</dbReference>
<dbReference type="EMBL" id="BC001635">
    <property type="protein sequence ID" value="AAH01635.1"/>
    <property type="molecule type" value="mRNA"/>
</dbReference>
<dbReference type="CCDS" id="CCDS6981.1"/>
<dbReference type="RefSeq" id="NP_001371338.1">
    <property type="nucleotide sequence ID" value="NM_001384409.1"/>
</dbReference>
<dbReference type="RefSeq" id="NP_001371339.1">
    <property type="nucleotide sequence ID" value="NM_001384410.1"/>
</dbReference>
<dbReference type="RefSeq" id="NP_001371340.1">
    <property type="nucleotide sequence ID" value="NM_001384411.1"/>
</dbReference>
<dbReference type="RefSeq" id="NP_001371341.1">
    <property type="nucleotide sequence ID" value="NM_001384412.1"/>
</dbReference>
<dbReference type="RefSeq" id="NP_001371342.1">
    <property type="nucleotide sequence ID" value="NM_001384413.1"/>
</dbReference>
<dbReference type="RefSeq" id="NP_001371343.1">
    <property type="nucleotide sequence ID" value="NM_001384414.1"/>
</dbReference>
<dbReference type="RefSeq" id="NP_001371344.1">
    <property type="nucleotide sequence ID" value="NM_001384415.1"/>
</dbReference>
<dbReference type="RefSeq" id="NP_060058.1">
    <property type="nucleotide sequence ID" value="NM_017588.3"/>
</dbReference>
<dbReference type="RefSeq" id="NP_438172.1">
    <property type="nucleotide sequence ID" value="NM_052821.4"/>
</dbReference>
<dbReference type="RefSeq" id="XP_005272220.1">
    <property type="nucleotide sequence ID" value="XM_005272163.1"/>
</dbReference>
<dbReference type="RefSeq" id="XP_047278652.1">
    <property type="nucleotide sequence ID" value="XM_047422696.1"/>
</dbReference>
<dbReference type="RefSeq" id="XP_054217828.1">
    <property type="nucleotide sequence ID" value="XM_054361853.1"/>
</dbReference>
<dbReference type="PDB" id="2CNX">
    <property type="method" value="X-ray"/>
    <property type="resolution" value="2.10 A"/>
    <property type="chains" value="A=20-334"/>
</dbReference>
<dbReference type="PDB" id="2CO0">
    <property type="method" value="X-ray"/>
    <property type="resolution" value="2.25 A"/>
    <property type="chains" value="A/C=20-334"/>
</dbReference>
<dbReference type="PDB" id="2G99">
    <property type="method" value="X-ray"/>
    <property type="resolution" value="1.90 A"/>
    <property type="chains" value="A/B=27-334"/>
</dbReference>
<dbReference type="PDB" id="2G9A">
    <property type="method" value="X-ray"/>
    <property type="resolution" value="2.70 A"/>
    <property type="chains" value="A=29-334"/>
</dbReference>
<dbReference type="PDB" id="2GNQ">
    <property type="method" value="X-ray"/>
    <property type="resolution" value="1.80 A"/>
    <property type="chains" value="A=1-334"/>
</dbReference>
<dbReference type="PDB" id="2H13">
    <property type="method" value="X-ray"/>
    <property type="resolution" value="1.58 A"/>
    <property type="chains" value="A=22-334"/>
</dbReference>
<dbReference type="PDB" id="2H14">
    <property type="method" value="X-ray"/>
    <property type="resolution" value="1.48 A"/>
    <property type="chains" value="A=22-334"/>
</dbReference>
<dbReference type="PDB" id="2H68">
    <property type="method" value="X-ray"/>
    <property type="resolution" value="1.79 A"/>
    <property type="chains" value="A/B=23-334"/>
</dbReference>
<dbReference type="PDB" id="2H6K">
    <property type="method" value="X-ray"/>
    <property type="resolution" value="1.89 A"/>
    <property type="chains" value="A/B=23-334"/>
</dbReference>
<dbReference type="PDB" id="2H6N">
    <property type="method" value="X-ray"/>
    <property type="resolution" value="1.50 A"/>
    <property type="chains" value="A/B=23-334"/>
</dbReference>
<dbReference type="PDB" id="2H6Q">
    <property type="method" value="X-ray"/>
    <property type="resolution" value="1.87 A"/>
    <property type="chains" value="A/B=23-334"/>
</dbReference>
<dbReference type="PDB" id="2H9L">
    <property type="method" value="X-ray"/>
    <property type="resolution" value="1.75 A"/>
    <property type="chains" value="A=24-334"/>
</dbReference>
<dbReference type="PDB" id="2H9M">
    <property type="method" value="X-ray"/>
    <property type="resolution" value="1.90 A"/>
    <property type="chains" value="A/C=24-334"/>
</dbReference>
<dbReference type="PDB" id="2H9N">
    <property type="method" value="X-ray"/>
    <property type="resolution" value="2.00 A"/>
    <property type="chains" value="A/C=24-334"/>
</dbReference>
<dbReference type="PDB" id="2H9P">
    <property type="method" value="X-ray"/>
    <property type="resolution" value="1.91 A"/>
    <property type="chains" value="A=24-334"/>
</dbReference>
<dbReference type="PDB" id="2O9K">
    <property type="method" value="X-ray"/>
    <property type="resolution" value="1.90 A"/>
    <property type="chains" value="A/C=24-334"/>
</dbReference>
<dbReference type="PDB" id="3EG6">
    <property type="method" value="X-ray"/>
    <property type="resolution" value="1.72 A"/>
    <property type="chains" value="A=23-334"/>
</dbReference>
<dbReference type="PDB" id="3EMH">
    <property type="method" value="X-ray"/>
    <property type="resolution" value="1.37 A"/>
    <property type="chains" value="A=25-334"/>
</dbReference>
<dbReference type="PDB" id="3MXX">
    <property type="method" value="X-ray"/>
    <property type="resolution" value="2.05 A"/>
    <property type="chains" value="A=31-334"/>
</dbReference>
<dbReference type="PDB" id="3N0D">
    <property type="method" value="X-ray"/>
    <property type="resolution" value="2.30 A"/>
    <property type="chains" value="A=31-334"/>
</dbReference>
<dbReference type="PDB" id="3N0E">
    <property type="method" value="X-ray"/>
    <property type="resolution" value="2.50 A"/>
    <property type="chains" value="A=31-334"/>
</dbReference>
<dbReference type="PDB" id="3P4F">
    <property type="method" value="X-ray"/>
    <property type="resolution" value="2.35 A"/>
    <property type="chains" value="A=22-334"/>
</dbReference>
<dbReference type="PDB" id="3PSL">
    <property type="method" value="X-ray"/>
    <property type="resolution" value="1.70 A"/>
    <property type="chains" value="A/B=21-334"/>
</dbReference>
<dbReference type="PDB" id="3SMR">
    <property type="method" value="X-ray"/>
    <property type="resolution" value="1.82 A"/>
    <property type="chains" value="A/B/C/D=24-334"/>
</dbReference>
<dbReference type="PDB" id="3UR4">
    <property type="method" value="X-ray"/>
    <property type="resolution" value="1.80 A"/>
    <property type="chains" value="A/B=24-334"/>
</dbReference>
<dbReference type="PDB" id="3UVK">
    <property type="method" value="X-ray"/>
    <property type="resolution" value="1.40 A"/>
    <property type="chains" value="A=21-334"/>
</dbReference>
<dbReference type="PDB" id="3UVL">
    <property type="method" value="X-ray"/>
    <property type="resolution" value="2.20 A"/>
    <property type="chains" value="A=21-334"/>
</dbReference>
<dbReference type="PDB" id="3UVM">
    <property type="method" value="X-ray"/>
    <property type="resolution" value="1.57 A"/>
    <property type="chains" value="A=21-334"/>
</dbReference>
<dbReference type="PDB" id="3UVN">
    <property type="method" value="X-ray"/>
    <property type="resolution" value="1.79 A"/>
    <property type="chains" value="A/C=21-334"/>
</dbReference>
<dbReference type="PDB" id="3UVO">
    <property type="method" value="X-ray"/>
    <property type="resolution" value="2.20 A"/>
    <property type="chains" value="A=21-334"/>
</dbReference>
<dbReference type="PDB" id="4A7J">
    <property type="method" value="X-ray"/>
    <property type="resolution" value="1.90 A"/>
    <property type="chains" value="A=21-334"/>
</dbReference>
<dbReference type="PDB" id="4CY1">
    <property type="method" value="X-ray"/>
    <property type="resolution" value="1.50 A"/>
    <property type="chains" value="A/B=23-334"/>
</dbReference>
<dbReference type="PDB" id="4CY2">
    <property type="method" value="X-ray"/>
    <property type="resolution" value="2.00 A"/>
    <property type="chains" value="A=23-334"/>
</dbReference>
<dbReference type="PDB" id="4ERQ">
    <property type="method" value="X-ray"/>
    <property type="resolution" value="1.91 A"/>
    <property type="chains" value="A/B/C=23-334"/>
</dbReference>
<dbReference type="PDB" id="4ERY">
    <property type="method" value="X-ray"/>
    <property type="resolution" value="1.30 A"/>
    <property type="chains" value="A=23-334"/>
</dbReference>
<dbReference type="PDB" id="4ERZ">
    <property type="method" value="X-ray"/>
    <property type="resolution" value="1.75 A"/>
    <property type="chains" value="A/B/C=23-334"/>
</dbReference>
<dbReference type="PDB" id="4ES0">
    <property type="method" value="X-ray"/>
    <property type="resolution" value="1.82 A"/>
    <property type="chains" value="A=23-334"/>
</dbReference>
<dbReference type="PDB" id="4ESG">
    <property type="method" value="X-ray"/>
    <property type="resolution" value="1.70 A"/>
    <property type="chains" value="A/B=23-334"/>
</dbReference>
<dbReference type="PDB" id="4EWR">
    <property type="method" value="X-ray"/>
    <property type="resolution" value="1.50 A"/>
    <property type="chains" value="A=23-334"/>
</dbReference>
<dbReference type="PDB" id="4GM3">
    <property type="method" value="X-ray"/>
    <property type="resolution" value="3.39 A"/>
    <property type="chains" value="A/B/C/D/E/F/G/H=22-334"/>
</dbReference>
<dbReference type="PDB" id="4GM8">
    <property type="method" value="X-ray"/>
    <property type="resolution" value="2.60 A"/>
    <property type="chains" value="A/B/C/D=22-334"/>
</dbReference>
<dbReference type="PDB" id="4GM9">
    <property type="method" value="X-ray"/>
    <property type="resolution" value="2.10 A"/>
    <property type="chains" value="A/B=22-334"/>
</dbReference>
<dbReference type="PDB" id="4GMB">
    <property type="method" value="X-ray"/>
    <property type="resolution" value="2.78 A"/>
    <property type="chains" value="A=22-334"/>
</dbReference>
<dbReference type="PDB" id="4IA9">
    <property type="method" value="X-ray"/>
    <property type="resolution" value="1.66 A"/>
    <property type="chains" value="A=24-334"/>
</dbReference>
<dbReference type="PDB" id="4O45">
    <property type="method" value="X-ray"/>
    <property type="resolution" value="1.87 A"/>
    <property type="chains" value="A=24-334"/>
</dbReference>
<dbReference type="PDB" id="4QL1">
    <property type="method" value="X-ray"/>
    <property type="resolution" value="1.50 A"/>
    <property type="chains" value="A/B=24-334"/>
</dbReference>
<dbReference type="PDB" id="4Y7R">
    <property type="method" value="X-ray"/>
    <property type="resolution" value="1.90 A"/>
    <property type="chains" value="A=22-334"/>
</dbReference>
<dbReference type="PDB" id="5EAL">
    <property type="method" value="X-ray"/>
    <property type="resolution" value="1.80 A"/>
    <property type="chains" value="A/B=24-334"/>
</dbReference>
<dbReference type="PDB" id="5EAM">
    <property type="method" value="X-ray"/>
    <property type="resolution" value="1.80 A"/>
    <property type="chains" value="A/B=24-334"/>
</dbReference>
<dbReference type="PDB" id="5EAP">
    <property type="method" value="X-ray"/>
    <property type="resolution" value="1.73 A"/>
    <property type="chains" value="A=24-334"/>
</dbReference>
<dbReference type="PDB" id="5EAR">
    <property type="method" value="X-ray"/>
    <property type="resolution" value="1.80 A"/>
    <property type="chains" value="A/B=24-334"/>
</dbReference>
<dbReference type="PDB" id="5M23">
    <property type="method" value="X-ray"/>
    <property type="resolution" value="1.97 A"/>
    <property type="chains" value="A=22-334"/>
</dbReference>
<dbReference type="PDB" id="5M25">
    <property type="method" value="X-ray"/>
    <property type="resolution" value="2.43 A"/>
    <property type="chains" value="A=22-334"/>
</dbReference>
<dbReference type="PDB" id="5SXM">
    <property type="method" value="X-ray"/>
    <property type="resolution" value="2.00 A"/>
    <property type="chains" value="A/B=23-334"/>
</dbReference>
<dbReference type="PDB" id="5VFC">
    <property type="method" value="X-ray"/>
    <property type="resolution" value="1.64 A"/>
    <property type="chains" value="A=24-334"/>
</dbReference>
<dbReference type="PDB" id="6BYN">
    <property type="method" value="X-ray"/>
    <property type="resolution" value="2.69 A"/>
    <property type="chains" value="W=31-334"/>
</dbReference>
<dbReference type="PDB" id="6D9X">
    <property type="method" value="X-ray"/>
    <property type="resolution" value="1.83 A"/>
    <property type="chains" value="A=22-334"/>
</dbReference>
<dbReference type="PDB" id="6DAI">
    <property type="method" value="X-ray"/>
    <property type="resolution" value="1.63 A"/>
    <property type="chains" value="A=22-334"/>
</dbReference>
<dbReference type="PDB" id="6DAK">
    <property type="method" value="X-ray"/>
    <property type="resolution" value="1.60 A"/>
    <property type="chains" value="A=22-334"/>
</dbReference>
<dbReference type="PDB" id="6DAR">
    <property type="method" value="X-ray"/>
    <property type="resolution" value="1.88 A"/>
    <property type="chains" value="A=22-334"/>
</dbReference>
<dbReference type="PDB" id="6DAS">
    <property type="method" value="X-ray"/>
    <property type="resolution" value="1.80 A"/>
    <property type="chains" value="A/B=22-334"/>
</dbReference>
<dbReference type="PDB" id="6DY7">
    <property type="method" value="X-ray"/>
    <property type="resolution" value="1.90 A"/>
    <property type="chains" value="A=31-334"/>
</dbReference>
<dbReference type="PDB" id="6DYA">
    <property type="method" value="X-ray"/>
    <property type="resolution" value="2.56 A"/>
    <property type="chains" value="A=30-334"/>
</dbReference>
<dbReference type="PDB" id="6E1Y">
    <property type="method" value="X-ray"/>
    <property type="resolution" value="1.22 A"/>
    <property type="chains" value="A/B=22-334"/>
</dbReference>
<dbReference type="PDB" id="6E1Z">
    <property type="method" value="X-ray"/>
    <property type="resolution" value="1.10 A"/>
    <property type="chains" value="A/B=22-334"/>
</dbReference>
<dbReference type="PDB" id="6E22">
    <property type="method" value="X-ray"/>
    <property type="resolution" value="1.60 A"/>
    <property type="chains" value="A/B=22-334"/>
</dbReference>
<dbReference type="PDB" id="6E23">
    <property type="method" value="X-ray"/>
    <property type="resolution" value="1.66 A"/>
    <property type="chains" value="A/B=22-334"/>
</dbReference>
<dbReference type="PDB" id="6IAM">
    <property type="method" value="X-ray"/>
    <property type="resolution" value="1.51 A"/>
    <property type="chains" value="A=29-334"/>
</dbReference>
<dbReference type="PDB" id="6KIU">
    <property type="method" value="EM"/>
    <property type="resolution" value="3.20 A"/>
    <property type="chains" value="R=1-334"/>
</dbReference>
<dbReference type="PDB" id="6KIV">
    <property type="method" value="EM"/>
    <property type="resolution" value="4.00 A"/>
    <property type="chains" value="R=1-334"/>
</dbReference>
<dbReference type="PDB" id="6KIW">
    <property type="method" value="EM"/>
    <property type="resolution" value="4.00 A"/>
    <property type="chains" value="R=1-334"/>
</dbReference>
<dbReference type="PDB" id="6KIX">
    <property type="method" value="EM"/>
    <property type="resolution" value="4.10 A"/>
    <property type="chains" value="R=1-334"/>
</dbReference>
<dbReference type="PDB" id="6KIZ">
    <property type="method" value="EM"/>
    <property type="resolution" value="4.50 A"/>
    <property type="chains" value="R=1-334"/>
</dbReference>
<dbReference type="PDB" id="6OFZ">
    <property type="method" value="X-ray"/>
    <property type="resolution" value="1.85 A"/>
    <property type="chains" value="A=22-334"/>
</dbReference>
<dbReference type="PDB" id="6OI0">
    <property type="method" value="X-ray"/>
    <property type="resolution" value="1.92 A"/>
    <property type="chains" value="A=22-334"/>
</dbReference>
<dbReference type="PDB" id="6OI1">
    <property type="method" value="X-ray"/>
    <property type="resolution" value="1.68 A"/>
    <property type="chains" value="A=22-334"/>
</dbReference>
<dbReference type="PDB" id="6OI2">
    <property type="method" value="X-ray"/>
    <property type="resolution" value="1.68 A"/>
    <property type="chains" value="A=22-334"/>
</dbReference>
<dbReference type="PDB" id="6OI3">
    <property type="method" value="X-ray"/>
    <property type="resolution" value="1.66 A"/>
    <property type="chains" value="A=22-334"/>
</dbReference>
<dbReference type="PDB" id="6PG3">
    <property type="method" value="X-ray"/>
    <property type="resolution" value="2.04 A"/>
    <property type="chains" value="A/B=22-334"/>
</dbReference>
<dbReference type="PDB" id="6PG4">
    <property type="method" value="X-ray"/>
    <property type="resolution" value="1.60 A"/>
    <property type="chains" value="A=32-334"/>
</dbReference>
<dbReference type="PDB" id="6PG5">
    <property type="method" value="X-ray"/>
    <property type="resolution" value="1.99 A"/>
    <property type="chains" value="A=32-334"/>
</dbReference>
<dbReference type="PDB" id="6PG6">
    <property type="method" value="X-ray"/>
    <property type="resolution" value="1.68 A"/>
    <property type="chains" value="A/B=22-334"/>
</dbReference>
<dbReference type="PDB" id="6PG7">
    <property type="method" value="X-ray"/>
    <property type="resolution" value="2.45 A"/>
    <property type="chains" value="A=32-334"/>
</dbReference>
<dbReference type="PDB" id="6PG8">
    <property type="method" value="X-ray"/>
    <property type="resolution" value="1.67 A"/>
    <property type="chains" value="A/B/C/D=22-334"/>
</dbReference>
<dbReference type="PDB" id="6PG9">
    <property type="method" value="X-ray"/>
    <property type="resolution" value="1.75 A"/>
    <property type="chains" value="A/B=22-334"/>
</dbReference>
<dbReference type="PDB" id="6PGA">
    <property type="method" value="X-ray"/>
    <property type="resolution" value="2.45 A"/>
    <property type="chains" value="A=32-334"/>
</dbReference>
<dbReference type="PDB" id="6PGB">
    <property type="method" value="X-ray"/>
    <property type="resolution" value="1.73 A"/>
    <property type="chains" value="A=32-334"/>
</dbReference>
<dbReference type="PDB" id="6PGC">
    <property type="method" value="X-ray"/>
    <property type="resolution" value="1.81 A"/>
    <property type="chains" value="A=32-334"/>
</dbReference>
<dbReference type="PDB" id="6PGD">
    <property type="method" value="X-ray"/>
    <property type="resolution" value="1.50 A"/>
    <property type="chains" value="A=32-334"/>
</dbReference>
<dbReference type="PDB" id="6PGE">
    <property type="method" value="X-ray"/>
    <property type="resolution" value="1.76 A"/>
    <property type="chains" value="A=32-334"/>
</dbReference>
<dbReference type="PDB" id="6PGF">
    <property type="method" value="X-ray"/>
    <property type="resolution" value="1.54 A"/>
    <property type="chains" value="A=32-334"/>
</dbReference>
<dbReference type="PDB" id="6PWV">
    <property type="method" value="EM"/>
    <property type="resolution" value="6.20 A"/>
    <property type="chains" value="B=22-334"/>
</dbReference>
<dbReference type="PDB" id="6PWW">
    <property type="method" value="EM"/>
    <property type="resolution" value="4.40 A"/>
    <property type="chains" value="B=22-334"/>
</dbReference>
<dbReference type="PDB" id="6U5M">
    <property type="method" value="X-ray"/>
    <property type="resolution" value="1.80 A"/>
    <property type="chains" value="A/B=31-334"/>
</dbReference>
<dbReference type="PDB" id="6U5Y">
    <property type="method" value="X-ray"/>
    <property type="resolution" value="1.53 A"/>
    <property type="chains" value="A/B=31-334"/>
</dbReference>
<dbReference type="PDB" id="6U6W">
    <property type="method" value="X-ray"/>
    <property type="resolution" value="1.20 A"/>
    <property type="chains" value="A/B=24-334"/>
</dbReference>
<dbReference type="PDB" id="6U80">
    <property type="method" value="X-ray"/>
    <property type="resolution" value="1.55 A"/>
    <property type="chains" value="A/B=24-334"/>
</dbReference>
<dbReference type="PDB" id="6U8B">
    <property type="method" value="X-ray"/>
    <property type="resolution" value="1.26 A"/>
    <property type="chains" value="A/B=24-334"/>
</dbReference>
<dbReference type="PDB" id="6U8L">
    <property type="method" value="X-ray"/>
    <property type="resolution" value="1.57 A"/>
    <property type="chains" value="A/B=31-334"/>
</dbReference>
<dbReference type="PDB" id="6U8O">
    <property type="method" value="X-ray"/>
    <property type="resolution" value="1.60 A"/>
    <property type="chains" value="A=31-334"/>
</dbReference>
<dbReference type="PDB" id="6UCS">
    <property type="method" value="X-ray"/>
    <property type="resolution" value="1.85 A"/>
    <property type="chains" value="A/B=22-334"/>
</dbReference>
<dbReference type="PDB" id="6UFX">
    <property type="method" value="X-ray"/>
    <property type="resolution" value="2.02 A"/>
    <property type="chains" value="A=32-334"/>
</dbReference>
<dbReference type="PDB" id="6UHY">
    <property type="method" value="X-ray"/>
    <property type="resolution" value="1.26 A"/>
    <property type="chains" value="A/B=31-334"/>
</dbReference>
<dbReference type="PDB" id="6UHZ">
    <property type="method" value="X-ray"/>
    <property type="resolution" value="1.26 A"/>
    <property type="chains" value="A/B=31-334"/>
</dbReference>
<dbReference type="PDB" id="6UIF">
    <property type="method" value="X-ray"/>
    <property type="resolution" value="1.60 A"/>
    <property type="chains" value="A/B=31-334"/>
</dbReference>
<dbReference type="PDB" id="6UIK">
    <property type="method" value="X-ray"/>
    <property type="resolution" value="1.60 A"/>
    <property type="chains" value="A/B=31-334"/>
</dbReference>
<dbReference type="PDB" id="6UJ4">
    <property type="method" value="X-ray"/>
    <property type="resolution" value="1.53 A"/>
    <property type="chains" value="A/B=31-334"/>
</dbReference>
<dbReference type="PDB" id="6UJH">
    <property type="method" value="X-ray"/>
    <property type="resolution" value="1.49 A"/>
    <property type="chains" value="A/B=22-334"/>
</dbReference>
<dbReference type="PDB" id="6UJJ">
    <property type="method" value="X-ray"/>
    <property type="resolution" value="1.73 A"/>
    <property type="chains" value="A=22-334"/>
</dbReference>
<dbReference type="PDB" id="6UJL">
    <property type="method" value="X-ray"/>
    <property type="resolution" value="1.60 A"/>
    <property type="chains" value="A=22-334"/>
</dbReference>
<dbReference type="PDB" id="6UOZ">
    <property type="method" value="X-ray"/>
    <property type="resolution" value="1.53 A"/>
    <property type="chains" value="A/B=31-334"/>
</dbReference>
<dbReference type="PDB" id="6W5I">
    <property type="method" value="EM"/>
    <property type="resolution" value="6.90 A"/>
    <property type="chains" value="B=22-334"/>
</dbReference>
<dbReference type="PDB" id="6W5M">
    <property type="method" value="EM"/>
    <property type="resolution" value="4.60 A"/>
    <property type="chains" value="B=22-334"/>
</dbReference>
<dbReference type="PDB" id="6W5N">
    <property type="method" value="EM"/>
    <property type="resolution" value="6.00 A"/>
    <property type="chains" value="B=22-334"/>
</dbReference>
<dbReference type="PDB" id="6WJQ">
    <property type="method" value="X-ray"/>
    <property type="resolution" value="2.71 A"/>
    <property type="chains" value="A/B=22-334"/>
</dbReference>
<dbReference type="PDB" id="7AXP">
    <property type="method" value="X-ray"/>
    <property type="resolution" value="2.43 A"/>
    <property type="chains" value="A=1-334"/>
</dbReference>
<dbReference type="PDB" id="7AXQ">
    <property type="method" value="X-ray"/>
    <property type="resolution" value="1.56 A"/>
    <property type="chains" value="A=1-334"/>
</dbReference>
<dbReference type="PDB" id="7AXS">
    <property type="method" value="X-ray"/>
    <property type="resolution" value="1.88 A"/>
    <property type="chains" value="A=1-334"/>
</dbReference>
<dbReference type="PDB" id="7AXU">
    <property type="method" value="X-ray"/>
    <property type="resolution" value="1.68 A"/>
    <property type="chains" value="A=1-334"/>
</dbReference>
<dbReference type="PDB" id="7AXX">
    <property type="method" value="X-ray"/>
    <property type="resolution" value="1.79 A"/>
    <property type="chains" value="A=1-334"/>
</dbReference>
<dbReference type="PDB" id="7BCY">
    <property type="method" value="X-ray"/>
    <property type="resolution" value="1.50 A"/>
    <property type="chains" value="A/B=25-334"/>
</dbReference>
<dbReference type="PDB" id="7BED">
    <property type="method" value="X-ray"/>
    <property type="resolution" value="1.26 A"/>
    <property type="chains" value="A/B=1-334"/>
</dbReference>
<dbReference type="PDB" id="7CFP">
    <property type="method" value="X-ray"/>
    <property type="resolution" value="1.60 A"/>
    <property type="chains" value="A=1-334"/>
</dbReference>
<dbReference type="PDB" id="7CFQ">
    <property type="method" value="X-ray"/>
    <property type="resolution" value="1.60 A"/>
    <property type="chains" value="A=1-334"/>
</dbReference>
<dbReference type="PDB" id="7DNO">
    <property type="method" value="X-ray"/>
    <property type="resolution" value="2.03 A"/>
    <property type="chains" value="A/B=24-334"/>
</dbReference>
<dbReference type="PDB" id="7JTO">
    <property type="method" value="X-ray"/>
    <property type="resolution" value="1.70 A"/>
    <property type="chains" value="B=31-334"/>
</dbReference>
<dbReference type="PDB" id="7JTP">
    <property type="method" value="X-ray"/>
    <property type="resolution" value="2.12 A"/>
    <property type="chains" value="A=31-334"/>
</dbReference>
<dbReference type="PDB" id="7MBM">
    <property type="method" value="EM"/>
    <property type="chains" value="B=22-334"/>
</dbReference>
<dbReference type="PDB" id="7MBN">
    <property type="method" value="EM"/>
    <property type="chains" value="B=22-334"/>
</dbReference>
<dbReference type="PDB" id="7Q2J">
    <property type="method" value="X-ray"/>
    <property type="resolution" value="2.50 A"/>
    <property type="chains" value="D=24-334"/>
</dbReference>
<dbReference type="PDB" id="7U9Y">
    <property type="method" value="X-ray"/>
    <property type="resolution" value="1.90 A"/>
    <property type="chains" value="A=30-334"/>
</dbReference>
<dbReference type="PDB" id="7UAS">
    <property type="method" value="X-ray"/>
    <property type="resolution" value="1.81 A"/>
    <property type="chains" value="A/B=22-334"/>
</dbReference>
<dbReference type="PDB" id="7UD5">
    <property type="method" value="EM"/>
    <property type="resolution" value="4.25 A"/>
    <property type="chains" value="L=2-334"/>
</dbReference>
<dbReference type="PDB" id="7WVK">
    <property type="method" value="X-ray"/>
    <property type="resolution" value="1.42 A"/>
    <property type="chains" value="A=22-334"/>
</dbReference>
<dbReference type="PDB" id="8BB2">
    <property type="method" value="X-ray"/>
    <property type="resolution" value="2.05 A"/>
    <property type="chains" value="B=33-334"/>
</dbReference>
<dbReference type="PDB" id="8BB3">
    <property type="method" value="X-ray"/>
    <property type="resolution" value="1.80 A"/>
    <property type="chains" value="B=33-334"/>
</dbReference>
<dbReference type="PDB" id="8BB4">
    <property type="method" value="X-ray"/>
    <property type="resolution" value="2.80 A"/>
    <property type="chains" value="Q=33-334"/>
</dbReference>
<dbReference type="PDB" id="8BB5">
    <property type="method" value="X-ray"/>
    <property type="resolution" value="2.20 A"/>
    <property type="chains" value="D=33-334"/>
</dbReference>
<dbReference type="PDB" id="8DU4">
    <property type="method" value="EM"/>
    <property type="resolution" value="3.55 A"/>
    <property type="chains" value="L=2-334"/>
</dbReference>
<dbReference type="PDB" id="8E9F">
    <property type="method" value="X-ray"/>
    <property type="resolution" value="1.55 A"/>
    <property type="chains" value="A=30-334"/>
</dbReference>
<dbReference type="PDB" id="8F1G">
    <property type="method" value="X-ray"/>
    <property type="resolution" value="2.14 A"/>
    <property type="chains" value="A/B=22-334"/>
</dbReference>
<dbReference type="PDB" id="8F93">
    <property type="method" value="X-ray"/>
    <property type="resolution" value="2.30 A"/>
    <property type="chains" value="A/B=22-334"/>
</dbReference>
<dbReference type="PDB" id="8G3C">
    <property type="method" value="X-ray"/>
    <property type="resolution" value="1.80 A"/>
    <property type="chains" value="A=22-334"/>
</dbReference>
<dbReference type="PDB" id="8G3E">
    <property type="method" value="X-ray"/>
    <property type="resolution" value="1.33 A"/>
    <property type="chains" value="A/B=22-334"/>
</dbReference>
<dbReference type="PDB" id="8HMX">
    <property type="method" value="X-ray"/>
    <property type="resolution" value="1.70 A"/>
    <property type="chains" value="A=31-334"/>
</dbReference>
<dbReference type="PDB" id="8Q1N">
    <property type="method" value="X-ray"/>
    <property type="resolution" value="1.84 A"/>
    <property type="chains" value="A/B=22-334"/>
</dbReference>
<dbReference type="PDB" id="8T5I">
    <property type="method" value="X-ray"/>
    <property type="resolution" value="1.70 A"/>
    <property type="chains" value="A/B=24-334"/>
</dbReference>
<dbReference type="PDB" id="8UJY">
    <property type="method" value="X-ray"/>
    <property type="resolution" value="2.01 A"/>
    <property type="chains" value="A/B=24-334"/>
</dbReference>
<dbReference type="PDB" id="8WXQ">
    <property type="method" value="X-ray"/>
    <property type="resolution" value="1.90 A"/>
    <property type="chains" value="A/B=24-334"/>
</dbReference>
<dbReference type="PDB" id="8WXR">
    <property type="method" value="X-ray"/>
    <property type="resolution" value="2.08 A"/>
    <property type="chains" value="A/B=24-334"/>
</dbReference>
<dbReference type="PDB" id="8WXT">
    <property type="method" value="X-ray"/>
    <property type="resolution" value="1.83 A"/>
    <property type="chains" value="A=24-334"/>
</dbReference>
<dbReference type="PDB" id="8WXU">
    <property type="method" value="X-ray"/>
    <property type="resolution" value="2.37 A"/>
    <property type="chains" value="B=24-334"/>
</dbReference>
<dbReference type="PDB" id="8WXV">
    <property type="method" value="X-ray"/>
    <property type="resolution" value="2.40 A"/>
    <property type="chains" value="A/C=24-334"/>
</dbReference>
<dbReference type="PDB" id="8WXX">
    <property type="method" value="X-ray"/>
    <property type="resolution" value="2.10 A"/>
    <property type="chains" value="A/B=24-334"/>
</dbReference>
<dbReference type="PDB" id="8X3R">
    <property type="method" value="X-ray"/>
    <property type="resolution" value="1.76 A"/>
    <property type="chains" value="A/B=1-334"/>
</dbReference>
<dbReference type="PDB" id="8X3S">
    <property type="method" value="X-ray"/>
    <property type="resolution" value="1.87 A"/>
    <property type="chains" value="A=21-334"/>
</dbReference>
<dbReference type="PDB" id="9B9H">
    <property type="method" value="X-ray"/>
    <property type="resolution" value="2.06 A"/>
    <property type="chains" value="A=24-334"/>
</dbReference>
<dbReference type="PDB" id="9B9T">
    <property type="method" value="X-ray"/>
    <property type="resolution" value="2.05 A"/>
    <property type="chains" value="A=24-334"/>
</dbReference>
<dbReference type="PDB" id="9B9W">
    <property type="method" value="X-ray"/>
    <property type="resolution" value="1.92 A"/>
    <property type="chains" value="A=24-334"/>
</dbReference>
<dbReference type="PDB" id="9BA2">
    <property type="method" value="X-ray"/>
    <property type="resolution" value="2.97 A"/>
    <property type="chains" value="B=24-334"/>
</dbReference>
<dbReference type="PDB" id="9D5Z">
    <property type="method" value="X-ray"/>
    <property type="resolution" value="1.70 A"/>
    <property type="chains" value="A/B=24-334"/>
</dbReference>
<dbReference type="PDB" id="9DLW">
    <property type="method" value="X-ray"/>
    <property type="resolution" value="2.07 A"/>
    <property type="chains" value="A=24-334"/>
</dbReference>
<dbReference type="PDBsum" id="2CNX"/>
<dbReference type="PDBsum" id="2CO0"/>
<dbReference type="PDBsum" id="2G99"/>
<dbReference type="PDBsum" id="2G9A"/>
<dbReference type="PDBsum" id="2GNQ"/>
<dbReference type="PDBsum" id="2H13"/>
<dbReference type="PDBsum" id="2H14"/>
<dbReference type="PDBsum" id="2H68"/>
<dbReference type="PDBsum" id="2H6K"/>
<dbReference type="PDBsum" id="2H6N"/>
<dbReference type="PDBsum" id="2H6Q"/>
<dbReference type="PDBsum" id="2H9L"/>
<dbReference type="PDBsum" id="2H9M"/>
<dbReference type="PDBsum" id="2H9N"/>
<dbReference type="PDBsum" id="2H9P"/>
<dbReference type="PDBsum" id="2O9K"/>
<dbReference type="PDBsum" id="3EG6"/>
<dbReference type="PDBsum" id="3EMH"/>
<dbReference type="PDBsum" id="3MXX"/>
<dbReference type="PDBsum" id="3N0D"/>
<dbReference type="PDBsum" id="3N0E"/>
<dbReference type="PDBsum" id="3P4F"/>
<dbReference type="PDBsum" id="3PSL"/>
<dbReference type="PDBsum" id="3SMR"/>
<dbReference type="PDBsum" id="3UR4"/>
<dbReference type="PDBsum" id="3UVK"/>
<dbReference type="PDBsum" id="3UVL"/>
<dbReference type="PDBsum" id="3UVM"/>
<dbReference type="PDBsum" id="3UVN"/>
<dbReference type="PDBsum" id="3UVO"/>
<dbReference type="PDBsum" id="4A7J"/>
<dbReference type="PDBsum" id="4CY1"/>
<dbReference type="PDBsum" id="4CY2"/>
<dbReference type="PDBsum" id="4ERQ"/>
<dbReference type="PDBsum" id="4ERY"/>
<dbReference type="PDBsum" id="4ERZ"/>
<dbReference type="PDBsum" id="4ES0"/>
<dbReference type="PDBsum" id="4ESG"/>
<dbReference type="PDBsum" id="4EWR"/>
<dbReference type="PDBsum" id="4GM3"/>
<dbReference type="PDBsum" id="4GM8"/>
<dbReference type="PDBsum" id="4GM9"/>
<dbReference type="PDBsum" id="4GMB"/>
<dbReference type="PDBsum" id="4IA9"/>
<dbReference type="PDBsum" id="4O45"/>
<dbReference type="PDBsum" id="4QL1"/>
<dbReference type="PDBsum" id="4Y7R"/>
<dbReference type="PDBsum" id="5EAL"/>
<dbReference type="PDBsum" id="5EAM"/>
<dbReference type="PDBsum" id="5EAP"/>
<dbReference type="PDBsum" id="5EAR"/>
<dbReference type="PDBsum" id="5M23"/>
<dbReference type="PDBsum" id="5M25"/>
<dbReference type="PDBsum" id="5SXM"/>
<dbReference type="PDBsum" id="5VFC"/>
<dbReference type="PDBsum" id="6BYN"/>
<dbReference type="PDBsum" id="6D9X"/>
<dbReference type="PDBsum" id="6DAI"/>
<dbReference type="PDBsum" id="6DAK"/>
<dbReference type="PDBsum" id="6DAR"/>
<dbReference type="PDBsum" id="6DAS"/>
<dbReference type="PDBsum" id="6DY7"/>
<dbReference type="PDBsum" id="6DYA"/>
<dbReference type="PDBsum" id="6E1Y"/>
<dbReference type="PDBsum" id="6E1Z"/>
<dbReference type="PDBsum" id="6E22"/>
<dbReference type="PDBsum" id="6E23"/>
<dbReference type="PDBsum" id="6IAM"/>
<dbReference type="PDBsum" id="6KIU"/>
<dbReference type="PDBsum" id="6KIV"/>
<dbReference type="PDBsum" id="6KIW"/>
<dbReference type="PDBsum" id="6KIX"/>
<dbReference type="PDBsum" id="6KIZ"/>
<dbReference type="PDBsum" id="6OFZ"/>
<dbReference type="PDBsum" id="6OI0"/>
<dbReference type="PDBsum" id="6OI1"/>
<dbReference type="PDBsum" id="6OI2"/>
<dbReference type="PDBsum" id="6OI3"/>
<dbReference type="PDBsum" id="6PG3"/>
<dbReference type="PDBsum" id="6PG4"/>
<dbReference type="PDBsum" id="6PG5"/>
<dbReference type="PDBsum" id="6PG6"/>
<dbReference type="PDBsum" id="6PG7"/>
<dbReference type="PDBsum" id="6PG8"/>
<dbReference type="PDBsum" id="6PG9"/>
<dbReference type="PDBsum" id="6PGA"/>
<dbReference type="PDBsum" id="6PGB"/>
<dbReference type="PDBsum" id="6PGC"/>
<dbReference type="PDBsum" id="6PGD"/>
<dbReference type="PDBsum" id="6PGE"/>
<dbReference type="PDBsum" id="6PGF"/>
<dbReference type="PDBsum" id="6PWV"/>
<dbReference type="PDBsum" id="6PWW"/>
<dbReference type="PDBsum" id="6U5M"/>
<dbReference type="PDBsum" id="6U5Y"/>
<dbReference type="PDBsum" id="6U6W"/>
<dbReference type="PDBsum" id="6U80"/>
<dbReference type="PDBsum" id="6U8B"/>
<dbReference type="PDBsum" id="6U8L"/>
<dbReference type="PDBsum" id="6U8O"/>
<dbReference type="PDBsum" id="6UCS"/>
<dbReference type="PDBsum" id="6UFX"/>
<dbReference type="PDBsum" id="6UHY"/>
<dbReference type="PDBsum" id="6UHZ"/>
<dbReference type="PDBsum" id="6UIF"/>
<dbReference type="PDBsum" id="6UIK"/>
<dbReference type="PDBsum" id="6UJ4"/>
<dbReference type="PDBsum" id="6UJH"/>
<dbReference type="PDBsum" id="6UJJ"/>
<dbReference type="PDBsum" id="6UJL"/>
<dbReference type="PDBsum" id="6UOZ"/>
<dbReference type="PDBsum" id="6W5I"/>
<dbReference type="PDBsum" id="6W5M"/>
<dbReference type="PDBsum" id="6W5N"/>
<dbReference type="PDBsum" id="6WJQ"/>
<dbReference type="PDBsum" id="7AXP"/>
<dbReference type="PDBsum" id="7AXQ"/>
<dbReference type="PDBsum" id="7AXS"/>
<dbReference type="PDBsum" id="7AXU"/>
<dbReference type="PDBsum" id="7AXX"/>
<dbReference type="PDBsum" id="7BCY"/>
<dbReference type="PDBsum" id="7BED"/>
<dbReference type="PDBsum" id="7CFP"/>
<dbReference type="PDBsum" id="7CFQ"/>
<dbReference type="PDBsum" id="7DNO"/>
<dbReference type="PDBsum" id="7JTO"/>
<dbReference type="PDBsum" id="7JTP"/>
<dbReference type="PDBsum" id="7MBM"/>
<dbReference type="PDBsum" id="7MBN"/>
<dbReference type="PDBsum" id="7Q2J"/>
<dbReference type="PDBsum" id="7U9Y"/>
<dbReference type="PDBsum" id="7UAS"/>
<dbReference type="PDBsum" id="7UD5"/>
<dbReference type="PDBsum" id="7WVK"/>
<dbReference type="PDBsum" id="8BB2"/>
<dbReference type="PDBsum" id="8BB3"/>
<dbReference type="PDBsum" id="8BB4"/>
<dbReference type="PDBsum" id="8BB5"/>
<dbReference type="PDBsum" id="8DU4"/>
<dbReference type="PDBsum" id="8E9F"/>
<dbReference type="PDBsum" id="8F1G"/>
<dbReference type="PDBsum" id="8F93"/>
<dbReference type="PDBsum" id="8G3C"/>
<dbReference type="PDBsum" id="8G3E"/>
<dbReference type="PDBsum" id="8HMX"/>
<dbReference type="PDBsum" id="8Q1N"/>
<dbReference type="PDBsum" id="8T5I"/>
<dbReference type="PDBsum" id="8UJY"/>
<dbReference type="PDBsum" id="8WXQ"/>
<dbReference type="PDBsum" id="8WXR"/>
<dbReference type="PDBsum" id="8WXT"/>
<dbReference type="PDBsum" id="8WXU"/>
<dbReference type="PDBsum" id="8WXV"/>
<dbReference type="PDBsum" id="8WXX"/>
<dbReference type="PDBsum" id="8X3R"/>
<dbReference type="PDBsum" id="8X3S"/>
<dbReference type="PDBsum" id="9B9H"/>
<dbReference type="PDBsum" id="9B9T"/>
<dbReference type="PDBsum" id="9B9W"/>
<dbReference type="PDBsum" id="9BA2"/>
<dbReference type="PDBsum" id="9D5Z"/>
<dbReference type="PDBsum" id="9DLW"/>
<dbReference type="EMDB" id="EMD-0693"/>
<dbReference type="EMDB" id="EMD-0694"/>
<dbReference type="EMDB" id="EMD-0695"/>
<dbReference type="EMDB" id="EMD-20512"/>
<dbReference type="EMDB" id="EMD-20513"/>
<dbReference type="EMDB" id="EMD-21542"/>
<dbReference type="EMDB" id="EMD-21543"/>
<dbReference type="EMDB" id="EMD-21544"/>
<dbReference type="EMDB" id="EMD-23738"/>
<dbReference type="EMDB" id="EMD-23739"/>
<dbReference type="EMDB" id="EMD-26454"/>
<dbReference type="EMDB" id="EMD-27715"/>
<dbReference type="EMDB" id="EMD-9998"/>
<dbReference type="EMDB" id="EMD-9999"/>
<dbReference type="SASBDB" id="P61964"/>
<dbReference type="SMR" id="P61964"/>
<dbReference type="BioGRID" id="116272">
    <property type="interactions" value="1107"/>
</dbReference>
<dbReference type="ComplexPortal" id="CPX-1004">
    <property type="entry name" value="PCAF-containing ATAC complex"/>
</dbReference>
<dbReference type="ComplexPortal" id="CPX-5850">
    <property type="entry name" value="Histone-lysine N-methyltransferase complex, KMT2A variant"/>
</dbReference>
<dbReference type="ComplexPortal" id="CPX-7062">
    <property type="entry name" value="Histone-lysine N-methyltransferase complex, KMT2B variant"/>
</dbReference>
<dbReference type="ComplexPortal" id="CPX-7091">
    <property type="entry name" value="Histone-lysine N-methyltransferase complex, KMT2C variant"/>
</dbReference>
<dbReference type="ComplexPortal" id="CPX-7104">
    <property type="entry name" value="Histone-lysine N-methyltransferase complex, KMT2D variant"/>
</dbReference>
<dbReference type="ComplexPortal" id="CPX-7110">
    <property type="entry name" value="Histone-lysine N-methyltransferase complex, SET1A variant"/>
</dbReference>
<dbReference type="ComplexPortal" id="CPX-7111">
    <property type="entry name" value="Histone-lysine N-methyltransferase complex, SET1B variant"/>
</dbReference>
<dbReference type="ComplexPortal" id="CPX-809">
    <property type="entry name" value="NSL histone acetyltransferase complex"/>
</dbReference>
<dbReference type="ComplexPortal" id="CPX-997">
    <property type="entry name" value="GCN5-containing ATAC complex"/>
</dbReference>
<dbReference type="CORUM" id="P61964"/>
<dbReference type="DIP" id="DIP-29223N"/>
<dbReference type="ELM" id="P61964"/>
<dbReference type="FunCoup" id="P61964">
    <property type="interactions" value="2452"/>
</dbReference>
<dbReference type="IntAct" id="P61964">
    <property type="interactions" value="213"/>
</dbReference>
<dbReference type="MINT" id="P61964"/>
<dbReference type="STRING" id="9606.ENSP00000351446"/>
<dbReference type="BindingDB" id="P61964"/>
<dbReference type="ChEMBL" id="CHEMBL1075317"/>
<dbReference type="GuidetoPHARMACOLOGY" id="2831"/>
<dbReference type="MoonProt" id="P61964"/>
<dbReference type="GlyGen" id="P61964">
    <property type="glycosylation" value="3 sites, 1 O-linked glycan (2 sites)"/>
</dbReference>
<dbReference type="iPTMnet" id="P61964"/>
<dbReference type="PhosphoSitePlus" id="P61964"/>
<dbReference type="SwissPalm" id="P61964"/>
<dbReference type="BioMuta" id="WDR5"/>
<dbReference type="DMDM" id="48429182"/>
<dbReference type="jPOST" id="P61964"/>
<dbReference type="MassIVE" id="P61964"/>
<dbReference type="PaxDb" id="9606-ENSP00000351446"/>
<dbReference type="PeptideAtlas" id="P61964"/>
<dbReference type="ProteomicsDB" id="57347"/>
<dbReference type="Pumba" id="P61964"/>
<dbReference type="ABCD" id="P61964">
    <property type="antibodies" value="5 sequenced antibodies"/>
</dbReference>
<dbReference type="Antibodypedia" id="31978">
    <property type="antibodies" value="455 antibodies from 42 providers"/>
</dbReference>
<dbReference type="DNASU" id="11091"/>
<dbReference type="Ensembl" id="ENST00000358625.4">
    <property type="protein sequence ID" value="ENSP00000351446.3"/>
    <property type="gene ID" value="ENSG00000196363.10"/>
</dbReference>
<dbReference type="GeneID" id="11091"/>
<dbReference type="KEGG" id="hsa:11091"/>
<dbReference type="MANE-Select" id="ENST00000358625.4">
    <property type="protein sequence ID" value="ENSP00000351446.3"/>
    <property type="RefSeq nucleotide sequence ID" value="NM_017588.3"/>
    <property type="RefSeq protein sequence ID" value="NP_060058.1"/>
</dbReference>
<dbReference type="UCSC" id="uc004cey.4">
    <property type="organism name" value="human"/>
</dbReference>
<dbReference type="AGR" id="HGNC:12757"/>
<dbReference type="CTD" id="11091"/>
<dbReference type="DisGeNET" id="11091"/>
<dbReference type="GeneCards" id="WDR5"/>
<dbReference type="HGNC" id="HGNC:12757">
    <property type="gene designation" value="WDR5"/>
</dbReference>
<dbReference type="HPA" id="ENSG00000196363">
    <property type="expression patterns" value="Low tissue specificity"/>
</dbReference>
<dbReference type="MIM" id="609012">
    <property type="type" value="gene"/>
</dbReference>
<dbReference type="neXtProt" id="NX_P61964"/>
<dbReference type="OpenTargets" id="ENSG00000196363"/>
<dbReference type="PharmGKB" id="PA37361"/>
<dbReference type="VEuPathDB" id="HostDB:ENSG00000196363"/>
<dbReference type="eggNOG" id="KOG0266">
    <property type="taxonomic scope" value="Eukaryota"/>
</dbReference>
<dbReference type="GeneTree" id="ENSGT00940000154143"/>
<dbReference type="HOGENOM" id="CLU_000288_57_1_1"/>
<dbReference type="InParanoid" id="P61964"/>
<dbReference type="OMA" id="CKGHDTA"/>
<dbReference type="OrthoDB" id="674604at2759"/>
<dbReference type="PAN-GO" id="P61964">
    <property type="GO annotations" value="3 GO annotations based on evolutionary models"/>
</dbReference>
<dbReference type="PhylomeDB" id="P61964"/>
<dbReference type="TreeFam" id="TF314125"/>
<dbReference type="PathwayCommons" id="P61964"/>
<dbReference type="Reactome" id="R-HSA-3214841">
    <property type="pathway name" value="PKMTs methylate histone lysines"/>
</dbReference>
<dbReference type="Reactome" id="R-HSA-3214847">
    <property type="pathway name" value="HATs acetylate histones"/>
</dbReference>
<dbReference type="Reactome" id="R-HSA-3214858">
    <property type="pathway name" value="RMTs methylate histone arginines"/>
</dbReference>
<dbReference type="Reactome" id="R-HSA-5617472">
    <property type="pathway name" value="Activation of anterior HOX genes in hindbrain development during early embryogenesis"/>
</dbReference>
<dbReference type="Reactome" id="R-HSA-8936459">
    <property type="pathway name" value="RUNX1 regulates genes involved in megakaryocyte differentiation and platelet function"/>
</dbReference>
<dbReference type="Reactome" id="R-HSA-8951664">
    <property type="pathway name" value="Neddylation"/>
</dbReference>
<dbReference type="Reactome" id="R-HSA-9733709">
    <property type="pathway name" value="Cardiogenesis"/>
</dbReference>
<dbReference type="Reactome" id="R-HSA-9772755">
    <property type="pathway name" value="Formation of WDR5-containing histone-modifying complexes"/>
</dbReference>
<dbReference type="Reactome" id="R-HSA-9818564">
    <property type="pathway name" value="Epigenetic regulation of gene expression by MLL3 and MLL4 complexes"/>
</dbReference>
<dbReference type="Reactome" id="R-HSA-9841922">
    <property type="pathway name" value="MLL4 and MLL3 complexes regulate expression of PPARG target genes in adipogenesis and hepatic steatosis"/>
</dbReference>
<dbReference type="SignaLink" id="P61964"/>
<dbReference type="SIGNOR" id="P61964"/>
<dbReference type="BioGRID-ORCS" id="11091">
    <property type="hits" value="721 hits in 1177 CRISPR screens"/>
</dbReference>
<dbReference type="CD-CODE" id="91857CE7">
    <property type="entry name" value="Nucleolus"/>
</dbReference>
<dbReference type="ChiTaRS" id="WDR5">
    <property type="organism name" value="human"/>
</dbReference>
<dbReference type="EvolutionaryTrace" id="P61964"/>
<dbReference type="GeneWiki" id="WDR5"/>
<dbReference type="GenomeRNAi" id="11091"/>
<dbReference type="Pharos" id="P61964">
    <property type="development level" value="Tchem"/>
</dbReference>
<dbReference type="PRO" id="PR:P61964"/>
<dbReference type="Proteomes" id="UP000005640">
    <property type="component" value="Chromosome 9"/>
</dbReference>
<dbReference type="RNAct" id="P61964">
    <property type="molecule type" value="protein"/>
</dbReference>
<dbReference type="Bgee" id="ENSG00000196363">
    <property type="expression patterns" value="Expressed in upper arm skin and 182 other cell types or tissues"/>
</dbReference>
<dbReference type="ExpressionAtlas" id="P61964">
    <property type="expression patterns" value="baseline and differential"/>
</dbReference>
<dbReference type="GO" id="GO:0140672">
    <property type="term" value="C:ATAC complex"/>
    <property type="evidence" value="ECO:0000314"/>
    <property type="project" value="BHF-UCL"/>
</dbReference>
<dbReference type="GO" id="GO:0000123">
    <property type="term" value="C:histone acetyltransferase complex"/>
    <property type="evidence" value="ECO:0000314"/>
    <property type="project" value="UniProtKB"/>
</dbReference>
<dbReference type="GO" id="GO:0035097">
    <property type="term" value="C:histone methyltransferase complex"/>
    <property type="evidence" value="ECO:0000314"/>
    <property type="project" value="UniProtKB"/>
</dbReference>
<dbReference type="GO" id="GO:0072686">
    <property type="term" value="C:mitotic spindle"/>
    <property type="evidence" value="ECO:0000303"/>
    <property type="project" value="ComplexPortal"/>
</dbReference>
<dbReference type="GO" id="GO:0071339">
    <property type="term" value="C:MLL1 complex"/>
    <property type="evidence" value="ECO:0000314"/>
    <property type="project" value="UniProtKB"/>
</dbReference>
<dbReference type="GO" id="GO:0044665">
    <property type="term" value="C:MLL1/2 complex"/>
    <property type="evidence" value="ECO:0000353"/>
    <property type="project" value="ComplexPortal"/>
</dbReference>
<dbReference type="GO" id="GO:0044666">
    <property type="term" value="C:MLL3/4 complex"/>
    <property type="evidence" value="ECO:0000314"/>
    <property type="project" value="UniProtKB"/>
</dbReference>
<dbReference type="GO" id="GO:0044545">
    <property type="term" value="C:NSL complex"/>
    <property type="evidence" value="ECO:0000314"/>
    <property type="project" value="ComplexPortal"/>
</dbReference>
<dbReference type="GO" id="GO:0005654">
    <property type="term" value="C:nucleoplasm"/>
    <property type="evidence" value="ECO:0000314"/>
    <property type="project" value="HPA"/>
</dbReference>
<dbReference type="GO" id="GO:0005634">
    <property type="term" value="C:nucleus"/>
    <property type="evidence" value="ECO:0000314"/>
    <property type="project" value="MGI"/>
</dbReference>
<dbReference type="GO" id="GO:0048188">
    <property type="term" value="C:Set1C/COMPASS complex"/>
    <property type="evidence" value="ECO:0000314"/>
    <property type="project" value="UniProtKB"/>
</dbReference>
<dbReference type="GO" id="GO:0042393">
    <property type="term" value="F:histone binding"/>
    <property type="evidence" value="ECO:0000318"/>
    <property type="project" value="GO_Central"/>
</dbReference>
<dbReference type="GO" id="GO:0042800">
    <property type="term" value="F:histone H3K4 methyltransferase activity"/>
    <property type="evidence" value="ECO:0007669"/>
    <property type="project" value="Ensembl"/>
</dbReference>
<dbReference type="GO" id="GO:0140109">
    <property type="term" value="F:histone H3K4me1 reader activity"/>
    <property type="evidence" value="ECO:0000314"/>
    <property type="project" value="GO_Central"/>
</dbReference>
<dbReference type="GO" id="GO:0140004">
    <property type="term" value="F:histone H3Q5ser reader activity"/>
    <property type="evidence" value="ECO:0000314"/>
    <property type="project" value="GO_Central"/>
</dbReference>
<dbReference type="GO" id="GO:0006094">
    <property type="term" value="P:gluconeogenesis"/>
    <property type="evidence" value="ECO:0007669"/>
    <property type="project" value="Ensembl"/>
</dbReference>
<dbReference type="GO" id="GO:0000122">
    <property type="term" value="P:negative regulation of transcription by RNA polymerase II"/>
    <property type="evidence" value="ECO:0000314"/>
    <property type="project" value="BHF-UCL"/>
</dbReference>
<dbReference type="GO" id="GO:0045893">
    <property type="term" value="P:positive regulation of DNA-templated transcription"/>
    <property type="evidence" value="ECO:0000303"/>
    <property type="project" value="ComplexPortal"/>
</dbReference>
<dbReference type="GO" id="GO:0045722">
    <property type="term" value="P:positive regulation of gluconeogenesis"/>
    <property type="evidence" value="ECO:0007669"/>
    <property type="project" value="Ensembl"/>
</dbReference>
<dbReference type="GO" id="GO:0051726">
    <property type="term" value="P:regulation of cell cycle"/>
    <property type="evidence" value="ECO:0000315"/>
    <property type="project" value="ComplexPortal"/>
</dbReference>
<dbReference type="GO" id="GO:0051302">
    <property type="term" value="P:regulation of cell division"/>
    <property type="evidence" value="ECO:0000314"/>
    <property type="project" value="ComplexPortal"/>
</dbReference>
<dbReference type="GO" id="GO:0006355">
    <property type="term" value="P:regulation of DNA-templated transcription"/>
    <property type="evidence" value="ECO:0000315"/>
    <property type="project" value="ComplexPortal"/>
</dbReference>
<dbReference type="GO" id="GO:0045995">
    <property type="term" value="P:regulation of embryonic development"/>
    <property type="evidence" value="ECO:0000266"/>
    <property type="project" value="ComplexPortal"/>
</dbReference>
<dbReference type="GO" id="GO:0006357">
    <property type="term" value="P:regulation of transcription by RNA polymerase II"/>
    <property type="evidence" value="ECO:0000314"/>
    <property type="project" value="ComplexPortal"/>
</dbReference>
<dbReference type="GO" id="GO:0001501">
    <property type="term" value="P:skeletal system development"/>
    <property type="evidence" value="ECO:0007669"/>
    <property type="project" value="Ensembl"/>
</dbReference>
<dbReference type="GO" id="GO:0045815">
    <property type="term" value="P:transcription initiation-coupled chromatin remodeling"/>
    <property type="evidence" value="ECO:0000314"/>
    <property type="project" value="UniProtKB"/>
</dbReference>
<dbReference type="CDD" id="cd00200">
    <property type="entry name" value="WD40"/>
    <property type="match status" value="1"/>
</dbReference>
<dbReference type="FunFam" id="2.130.10.10:FF:000029">
    <property type="entry name" value="WD repeat-containing protein 5"/>
    <property type="match status" value="1"/>
</dbReference>
<dbReference type="Gene3D" id="2.130.10.10">
    <property type="entry name" value="YVTN repeat-like/Quinoprotein amine dehydrogenase"/>
    <property type="match status" value="1"/>
</dbReference>
<dbReference type="IDEAL" id="IID00377"/>
<dbReference type="InterPro" id="IPR020472">
    <property type="entry name" value="G-protein_beta_WD-40_rep"/>
</dbReference>
<dbReference type="InterPro" id="IPR015943">
    <property type="entry name" value="WD40/YVTN_repeat-like_dom_sf"/>
</dbReference>
<dbReference type="InterPro" id="IPR019775">
    <property type="entry name" value="WD40_repeat_CS"/>
</dbReference>
<dbReference type="InterPro" id="IPR036322">
    <property type="entry name" value="WD40_repeat_dom_sf"/>
</dbReference>
<dbReference type="InterPro" id="IPR001680">
    <property type="entry name" value="WD40_rpt"/>
</dbReference>
<dbReference type="PANTHER" id="PTHR22847:SF560">
    <property type="entry name" value="WD REPEAT-CONTAINING PROTEIN 5"/>
    <property type="match status" value="1"/>
</dbReference>
<dbReference type="PANTHER" id="PTHR22847">
    <property type="entry name" value="WD40 REPEAT PROTEIN"/>
    <property type="match status" value="1"/>
</dbReference>
<dbReference type="Pfam" id="PF25175">
    <property type="entry name" value="Beta-prop_WDR5"/>
    <property type="match status" value="1"/>
</dbReference>
<dbReference type="PIRSF" id="PIRSF002394">
    <property type="entry name" value="GN-bd_beta"/>
    <property type="match status" value="1"/>
</dbReference>
<dbReference type="PRINTS" id="PR00320">
    <property type="entry name" value="GPROTEINBRPT"/>
</dbReference>
<dbReference type="SMART" id="SM00320">
    <property type="entry name" value="WD40"/>
    <property type="match status" value="7"/>
</dbReference>
<dbReference type="SUPFAM" id="SSF50978">
    <property type="entry name" value="WD40 repeat-like"/>
    <property type="match status" value="1"/>
</dbReference>
<dbReference type="PROSITE" id="PS00678">
    <property type="entry name" value="WD_REPEATS_1"/>
    <property type="match status" value="4"/>
</dbReference>
<dbReference type="PROSITE" id="PS50082">
    <property type="entry name" value="WD_REPEATS_2"/>
    <property type="match status" value="6"/>
</dbReference>
<dbReference type="PROSITE" id="PS50294">
    <property type="entry name" value="WD_REPEATS_REGION"/>
    <property type="match status" value="1"/>
</dbReference>
<comment type="function">
    <text evidence="1 9 11 20 21 22 23 24 25 26">Contributes to histone modification (PubMed:16600877, PubMed:16829960, PubMed:19103755, PubMed:19131338, PubMed:19556245, PubMed:20018852). May position the N-terminus of histone H3 for efficient trimethylation at 'Lys-4' (PubMed:16829960). As part of the MLL1/MLL complex it is involved in methylation and dimethylation at 'Lys-4' of histone H3 (PubMed:19556245). H3 'Lys-4' methylation represents a specific tag for epigenetic transcriptional activation (PubMed:18840606). As part of the NSL complex it may be involved in acetylation of nucleosomal histone H4 on several lysine residues (PubMed:19103755, PubMed:20018852). May regulate osteoblasts differentiation (By similarity). In association with RBBP5 and ASH2L, stimulates the histone methyltransferase activities of KMT2A, KMT2B, KMT2C, KMT2D, SETD1A and SETD1B (PubMed:21220120, PubMed:22266653).</text>
</comment>
<comment type="subunit">
    <text evidence="1 2 4 5 6 7 8 9 10 11 12 13 14 15 16 17 18 19 20 21 22 23 24 25 26 27 28">Interacts with PAXBP1; the interaction is direct and links a WDR5-containing histone methyltransferase complex to PAX7 and PAX3 (By similarity). Interacts with HCFC1 (PubMed:12670868). Component of the ATAC complex, a complex with histone acetyltransferase activity on histones H3 and H4 (PubMed:19103755). Component of the SET1 complex, at least composed of the catalytic subunit (SETD1A or SETD1B), WDR5, WDR82, RBBP5, ASH2L/ASH2, CXXC1/CFP1, HCFC1 and DPY30 (PubMed:16253997, PubMed:17355966, PubMed:17998332, PubMed:18838538). Core component of several methyltransferase-containing complexes including MLL1/MLL, MLL2/3 (also named ASCOM complex) and MLL4/WBP7 (PubMed:15199122, PubMed:15960975, PubMed:17021013, PubMed:17500065). Each complex is at least composed of ASH2L, RBBP5, WDR5, DPY30, one or more specific histone methyltransferases (KMT2A/MLL1, KMT2D/MLL2, KMT2C/MLL3 and KMT2B/MLL4), and the facultative components PAGR1, BACC1, CHD8, E2F6, HCFC1, HCFC2, HSP70, INO80C, KDM6A, KANSL1, LAS1L, MAX, MCRS1, MEN1, MGA, MYST1/MOF, NCOA6, PAXIP1/PTIP, PELP1, PHF20, PRP31, RING2, RUVB1/TIP49A, RUVB2/TIP49B, SENP3, TAF1, TAF4, TAF6, TAF7, TAF9, TEX10 and alpha- and beta-tubulin (PubMed:14992727, PubMed:18378692). Component of the NSL complex at least composed of MOF/KAT8, KANSL1, KANSL2, KANSL3, MCRS1, PHF20, OGT1/OGT, WDR5 and HCFC1 (PubMed:20018852). Interacts with KMT2A/MLL1 (via WIN motif) and RBBP5; the interaction is direct (PubMed:18829459, PubMed:18840606, PubMed:19556245, PubMed:21220120, PubMed:22266653, PubMed:22665483). Component of the ADA2A-containing complex (ATAC), composed of KAT14, KAT2A, TADA2L, TADA3L, ZZ3, MBIP, WDR5, YEATS2, CCDC101 and DR1 (PubMed:19103755). In the complex, it probably interacts directly with KAT2A, MBIP and KAT14 (PubMed:19103755). Interacts with histone H3 (PubMed:16600877, PubMed:16829959, PubMed:16829960, PubMed:16946699). Interacts with SETD1A (via WIN motif) (PubMed:17998332, PubMed:22266653, PubMed:22665483). Component of a histone methylation complex composed of at least ZNF335, RBBP5, ASH2L and WDR5; the complex may have histone H3-specific methyltransferase activity, however does not have specificity for 'Lys-4' of histone H3 (PubMed:19131338). Interacts with ZNF335 (PubMed:19131338, PubMed:23178126). Components of this complex may associate with components of the ZNF335-CCAR2-EMSY nuclear receptor-mediated transcription complex to form a complex at least composed of ZNF335, HCFC1, CCAR2, EMSY, MKI67, RBBP5, ASH2L and WDR5 (PubMed:19131338). Interacts with PER1 (By similarity). Interacts with KMT2B (via WIN motif), KMT2C (via WIN motif), KMT2D (via WIN motif) and SETD1B (via WIN motif) (PubMed:18840606, PubMed:22266653, PubMed:22665483).</text>
</comment>
<comment type="subunit">
    <text evidence="30">(Microbial infection) Interacts with herpes virus 8/HHV-8 protein LANA1; this interaction regulates the MLL1 histone methyltransferase activity on viral DNA.</text>
</comment>
<comment type="interaction">
    <interactant intactId="EBI-540834">
        <id>P61964</id>
    </interactant>
    <interactant intactId="EBI-1237481">
        <id>O43823</id>
        <label>AKAP8</label>
    </interactant>
    <organismsDiffer>false</organismsDiffer>
    <experiments>3</experiments>
</comment>
<comment type="interaction">
    <interactant intactId="EBI-540834">
        <id>P61964</id>
    </interactant>
    <interactant intactId="EBI-396211">
        <id>Q9UJX6</id>
        <label>ANAPC2</label>
    </interactant>
    <organismsDiffer>false</organismsDiffer>
    <experiments>3</experiments>
</comment>
<comment type="interaction">
    <interactant intactId="EBI-540834">
        <id>P61964</id>
    </interactant>
    <interactant intactId="EBI-945980">
        <id>P54259</id>
        <label>ATN1</label>
    </interactant>
    <organismsDiffer>false</organismsDiffer>
    <experiments>6</experiments>
</comment>
<comment type="interaction">
    <interactant intactId="EBI-540834">
        <id>P61964</id>
    </interactant>
    <interactant intactId="EBI-11954292">
        <id>Q86V38</id>
        <label>ATN1</label>
    </interactant>
    <organismsDiffer>false</organismsDiffer>
    <experiments>3</experiments>
</comment>
<comment type="interaction">
    <interactant intactId="EBI-540834">
        <id>P61964</id>
    </interactant>
    <interactant intactId="EBI-17289784">
        <id>Q96PG8</id>
        <label>BBC3</label>
    </interactant>
    <organismsDiffer>false</organismsDiffer>
    <experiments>3</experiments>
</comment>
<comment type="interaction">
    <interactant intactId="EBI-540834">
        <id>P61964</id>
    </interactant>
    <interactant intactId="EBI-2654318">
        <id>Q8NFC6</id>
        <label>BOD1L1</label>
    </interactant>
    <organismsDiffer>false</organismsDiffer>
    <experiments>5</experiments>
</comment>
<comment type="interaction">
    <interactant intactId="EBI-540834">
        <id>P61964</id>
    </interactant>
    <interactant intactId="EBI-10173042">
        <id>A2RRG2</id>
        <label>C1orf104</label>
    </interactant>
    <organismsDiffer>false</organismsDiffer>
    <experiments>3</experiments>
</comment>
<comment type="interaction">
    <interactant intactId="EBI-540834">
        <id>P61964</id>
    </interactant>
    <interactant intactId="EBI-1169146">
        <id>Q9HCK8</id>
        <label>CHD8</label>
    </interactant>
    <organismsDiffer>false</organismsDiffer>
    <experiments>3</experiments>
</comment>
<comment type="interaction">
    <interactant intactId="EBI-540834">
        <id>P61964</id>
    </interactant>
    <interactant intactId="EBI-356015">
        <id>Q14204</id>
        <label>DYNC1H1</label>
    </interactant>
    <organismsDiffer>false</organismsDiffer>
    <experiments>3</experiments>
</comment>
<comment type="interaction">
    <interactant intactId="EBI-540834">
        <id>P61964</id>
    </interactant>
    <interactant intactId="EBI-4280426">
        <id>Q6PEV8</id>
        <label>FAM199X</label>
    </interactant>
    <organismsDiffer>false</organismsDiffer>
    <experiments>5</experiments>
</comment>
<comment type="interaction">
    <interactant intactId="EBI-540834">
        <id>P61964</id>
    </interactant>
    <interactant intactId="EBI-79722">
        <id>P68431</id>
        <label>H3C12</label>
    </interactant>
    <organismsDiffer>false</organismsDiffer>
    <experiments>11</experiments>
</comment>
<comment type="interaction">
    <interactant intactId="EBI-540834">
        <id>P61964</id>
    </interactant>
    <interactant intactId="EBI-396176">
        <id>P51610</id>
        <label>HCFC1</label>
    </interactant>
    <organismsDiffer>false</organismsDiffer>
    <experiments>6</experiments>
</comment>
<comment type="interaction">
    <interactant intactId="EBI-540834">
        <id>P61964</id>
    </interactant>
    <interactant intactId="EBI-2556750">
        <id>Q03933</id>
        <label>HSF2</label>
    </interactant>
    <organismsDiffer>false</organismsDiffer>
    <experiments>7</experiments>
</comment>
<comment type="interaction">
    <interactant intactId="EBI-540834">
        <id>P61964</id>
    </interactant>
    <interactant intactId="EBI-740244">
        <id>Q7Z3B3</id>
        <label>KANSL1</label>
    </interactant>
    <organismsDiffer>false</organismsDiffer>
    <experiments>14</experiments>
</comment>
<comment type="interaction">
    <interactant intactId="EBI-540834">
        <id>P61964</id>
    </interactant>
    <interactant intactId="EBI-2560840">
        <id>Q9H9L4</id>
        <label>KANSL2</label>
    </interactant>
    <organismsDiffer>false</organismsDiffer>
    <experiments>4</experiments>
</comment>
<comment type="interaction">
    <interactant intactId="EBI-540834">
        <id>P61964</id>
    </interactant>
    <interactant intactId="EBI-948013">
        <id>Q92794</id>
        <label>KAT6A</label>
    </interactant>
    <organismsDiffer>false</organismsDiffer>
    <experiments>4</experiments>
</comment>
<comment type="interaction">
    <interactant intactId="EBI-540834">
        <id>P61964</id>
    </interactant>
    <interactant intactId="EBI-4292203">
        <id>O15550</id>
        <label>KDM6A</label>
    </interactant>
    <organismsDiffer>false</organismsDiffer>
    <experiments>7</experiments>
</comment>
<comment type="interaction">
    <interactant intactId="EBI-540834">
        <id>P61964</id>
    </interactant>
    <interactant intactId="EBI-2432309">
        <id>Q92876</id>
        <label>KLK6</label>
    </interactant>
    <organismsDiffer>false</organismsDiffer>
    <experiments>3</experiments>
</comment>
<comment type="interaction">
    <interactant intactId="EBI-540834">
        <id>P61964</id>
    </interactant>
    <interactant intactId="EBI-591370">
        <id>Q03164</id>
        <label>KMT2A</label>
    </interactant>
    <organismsDiffer>false</organismsDiffer>
    <experiments>17</experiments>
</comment>
<comment type="interaction">
    <interactant intactId="EBI-540834">
        <id>P61964</id>
    </interactant>
    <interactant intactId="EBI-2638616">
        <id>PRO_0000390950</id>
        <label>KMT2A</label>
        <dbReference type="UniProtKB" id="Q03164"/>
    </interactant>
    <organismsDiffer>false</organismsDiffer>
    <experiments>2</experiments>
</comment>
<comment type="interaction">
    <interactant intactId="EBI-540834">
        <id>P61964</id>
    </interactant>
    <interactant intactId="EBI-765774">
        <id>Q9UMN6</id>
        <label>KMT2B</label>
    </interactant>
    <organismsDiffer>false</organismsDiffer>
    <experiments>10</experiments>
</comment>
<comment type="interaction">
    <interactant intactId="EBI-540834">
        <id>P61964</id>
    </interactant>
    <interactant intactId="EBI-1042997">
        <id>Q8NEZ4</id>
        <label>KMT2C</label>
    </interactant>
    <organismsDiffer>false</organismsDiffer>
    <experiments>6</experiments>
</comment>
<comment type="interaction">
    <interactant intactId="EBI-540834">
        <id>P61964</id>
    </interactant>
    <interactant intactId="EBI-996065">
        <id>O14686</id>
        <label>KMT2D</label>
    </interactant>
    <organismsDiffer>false</organismsDiffer>
    <experiments>11</experiments>
</comment>
<comment type="interaction">
    <interactant intactId="EBI-540834">
        <id>P61964</id>
    </interactant>
    <interactant intactId="EBI-5235902">
        <id>Q9Y4F3</id>
        <label>MARF1</label>
    </interactant>
    <organismsDiffer>false</organismsDiffer>
    <experiments>6</experiments>
</comment>
<comment type="interaction">
    <interactant intactId="EBI-540834">
        <id>P61964</id>
    </interactant>
    <interactant intactId="EBI-15577799">
        <id>Q7Z434-1</id>
        <label>MAVS</label>
    </interactant>
    <organismsDiffer>false</organismsDiffer>
    <experiments>3</experiments>
</comment>
<comment type="interaction">
    <interactant intactId="EBI-540834">
        <id>P61964</id>
    </interactant>
    <interactant intactId="EBI-741953">
        <id>Q9NS73</id>
        <label>MBIP</label>
    </interactant>
    <organismsDiffer>false</organismsDiffer>
    <experiments>8</experiments>
</comment>
<comment type="interaction">
    <interactant intactId="EBI-540834">
        <id>P61964</id>
    </interactant>
    <interactant intactId="EBI-10182361">
        <id>Q9NS73-5</id>
        <label>MBIP</label>
    </interactant>
    <organismsDiffer>false</organismsDiffer>
    <experiments>4</experiments>
</comment>
<comment type="interaction">
    <interactant intactId="EBI-540834">
        <id>P61964</id>
    </interactant>
    <interactant intactId="EBI-398437">
        <id>O15151</id>
        <label>MDM4</label>
    </interactant>
    <organismsDiffer>false</organismsDiffer>
    <experiments>3</experiments>
</comment>
<comment type="interaction">
    <interactant intactId="EBI-540834">
        <id>P61964</id>
    </interactant>
    <interactant intactId="EBI-592789">
        <id>O00255</id>
        <label>MEN1</label>
    </interactant>
    <organismsDiffer>false</organismsDiffer>
    <experiments>4</experiments>
</comment>
<comment type="interaction">
    <interactant intactId="EBI-540834">
        <id>P61964</id>
    </interactant>
    <interactant intactId="EBI-16439278">
        <id>Q6FHY5</id>
        <label>MEOX2</label>
    </interactant>
    <organismsDiffer>false</organismsDiffer>
    <experiments>3</experiments>
</comment>
<comment type="interaction">
    <interactant intactId="EBI-540834">
        <id>P61964</id>
    </interactant>
    <interactant intactId="EBI-78670">
        <id>Q14686</id>
        <label>NCOA6</label>
    </interactant>
    <organismsDiffer>false</organismsDiffer>
    <experiments>10</experiments>
</comment>
<comment type="interaction">
    <interactant intactId="EBI-540834">
        <id>P61964</id>
    </interactant>
    <interactant intactId="EBI-7216962">
        <id>Q9Y5X4</id>
        <label>NR2E3</label>
    </interactant>
    <organismsDiffer>false</organismsDiffer>
    <experiments>5</experiments>
</comment>
<comment type="interaction">
    <interactant intactId="EBI-540834">
        <id>P61964</id>
    </interactant>
    <interactant intactId="EBI-743225">
        <id>Q6ZW49</id>
        <label>PAXIP1</label>
    </interactant>
    <organismsDiffer>false</organismsDiffer>
    <experiments>11</experiments>
</comment>
<comment type="interaction">
    <interactant intactId="EBI-540834">
        <id>P61964</id>
    </interactant>
    <interactant intactId="EBI-11524542">
        <id>O76083-2</id>
        <label>PDE9A</label>
    </interactant>
    <organismsDiffer>false</organismsDiffer>
    <experiments>3</experiments>
</comment>
<comment type="interaction">
    <interactant intactId="EBI-540834">
        <id>P61964</id>
    </interactant>
    <interactant intactId="EBI-592823">
        <id>Q15291</id>
        <label>RBBP5</label>
    </interactant>
    <organismsDiffer>false</organismsDiffer>
    <experiments>17</experiments>
</comment>
<comment type="interaction">
    <interactant intactId="EBI-540834">
        <id>P61964</id>
    </interactant>
    <interactant intactId="EBI-52315133">
        <id>C0HLS1</id>
        <label>SCRIB</label>
    </interactant>
    <organismsDiffer>false</organismsDiffer>
    <experiments>6</experiments>
</comment>
<comment type="interaction">
    <interactant intactId="EBI-540834">
        <id>P61964</id>
    </interactant>
    <interactant intactId="EBI-3867173">
        <id>A7MD48</id>
        <label>SRRM4</label>
    </interactant>
    <organismsDiffer>false</organismsDiffer>
    <experiments>3</experiments>
</comment>
<comment type="interaction">
    <interactant intactId="EBI-540834">
        <id>P61964</id>
    </interactant>
    <interactant intactId="EBI-2212028">
        <id>Q9Y2D8</id>
        <label>SSX2IP</label>
    </interactant>
    <organismsDiffer>false</organismsDiffer>
    <experiments>3</experiments>
</comment>
<comment type="interaction">
    <interactant intactId="EBI-540834">
        <id>P61964</id>
    </interactant>
    <interactant intactId="EBI-750109">
        <id>Q9NYB0</id>
        <label>TERF2IP</label>
    </interactant>
    <organismsDiffer>false</organismsDiffer>
    <experiments>2</experiments>
</comment>
<comment type="interaction">
    <interactant intactId="EBI-540834">
        <id>P61964</id>
    </interactant>
    <interactant intactId="EBI-357631">
        <id>Q13114</id>
        <label>TRAF3</label>
    </interactant>
    <organismsDiffer>false</organismsDiffer>
    <experiments>2</experiments>
</comment>
<comment type="interaction">
    <interactant intactId="EBI-540834">
        <id>P61964</id>
    </interactant>
    <interactant intactId="EBI-359276">
        <id>Q9Y4K3</id>
        <label>TRAF6</label>
    </interactant>
    <organismsDiffer>false</organismsDiffer>
    <experiments>2</experiments>
</comment>
<comment type="interaction">
    <interactant intactId="EBI-540834">
        <id>P61964</id>
    </interactant>
    <interactant intactId="EBI-743923">
        <id>O00308</id>
        <label>WWP2</label>
    </interactant>
    <organismsDiffer>false</organismsDiffer>
    <experiments>3</experiments>
</comment>
<comment type="interaction">
    <interactant intactId="EBI-540834">
        <id>P61964</id>
    </interactant>
    <interactant intactId="EBI-744864">
        <id>P10074</id>
        <label>ZBTB48</label>
    </interactant>
    <organismsDiffer>false</organismsDiffer>
    <experiments>3</experiments>
</comment>
<comment type="interaction">
    <interactant intactId="EBI-540834">
        <id>P61964</id>
    </interactant>
    <interactant intactId="EBI-1538838">
        <id>Q2QGD7</id>
        <label>ZXDC</label>
    </interactant>
    <organismsDiffer>false</organismsDiffer>
    <experiments>6</experiments>
</comment>
<comment type="interaction">
    <interactant intactId="EBI-540834">
        <id>P61964</id>
    </interactant>
    <interactant intactId="EBI-2795524">
        <id>Q8IYH5</id>
        <label>ZZZ3</label>
    </interactant>
    <organismsDiffer>false</organismsDiffer>
    <experiments>4</experiments>
</comment>
<comment type="interaction">
    <interactant intactId="EBI-540834">
        <id>P61964</id>
    </interactant>
    <interactant intactId="EBI-10218875">
        <id>Q9H891</id>
    </interactant>
    <organismsDiffer>false</organismsDiffer>
    <experiments>3</experiments>
</comment>
<comment type="interaction">
    <interactant intactId="EBI-540834">
        <id>P61964</id>
    </interactant>
    <interactant intactId="EBI-644534">
        <id>Q9WTL8</id>
        <label>Bmal1</label>
    </interactant>
    <organismsDiffer>true</organismsDiffer>
    <experiments>2</experiments>
</comment>
<comment type="subcellular location">
    <subcellularLocation>
        <location evidence="14 24 30">Nucleus</location>
    </subcellularLocation>
</comment>
<comment type="similarity">
    <text evidence="31">Belongs to the WD repeat WDR5/wds family.</text>
</comment>
<comment type="sequence caution" evidence="31">
    <conflict type="erroneous initiation">
        <sequence resource="EMBL-CDS" id="CAB66159"/>
    </conflict>
    <text>Extended N-terminus.</text>
</comment>
<organism>
    <name type="scientific">Homo sapiens</name>
    <name type="common">Human</name>
    <dbReference type="NCBI Taxonomy" id="9606"/>
    <lineage>
        <taxon>Eukaryota</taxon>
        <taxon>Metazoa</taxon>
        <taxon>Chordata</taxon>
        <taxon>Craniata</taxon>
        <taxon>Vertebrata</taxon>
        <taxon>Euteleostomi</taxon>
        <taxon>Mammalia</taxon>
        <taxon>Eutheria</taxon>
        <taxon>Euarchontoglires</taxon>
        <taxon>Primates</taxon>
        <taxon>Haplorrhini</taxon>
        <taxon>Catarrhini</taxon>
        <taxon>Hominidae</taxon>
        <taxon>Homo</taxon>
    </lineage>
</organism>
<reference key="1">
    <citation type="submission" date="1998-09" db="EMBL/GenBank/DDBJ databases">
        <title>Cloning of a sugar transporter gene, a G-beta subunit like gene and three novel genes in human chromosome 9q34.</title>
        <authorList>
            <person name="Young J.M."/>
            <person name="Woodward K.J."/>
            <person name="Aziz S."/>
            <person name="Burley M."/>
            <person name="Kwiatkowski D.J."/>
            <person name="Povey S."/>
        </authorList>
    </citation>
    <scope>NUCLEOTIDE SEQUENCE [MRNA]</scope>
    <source>
        <tissue>Uterus</tissue>
    </source>
</reference>
<reference key="2">
    <citation type="journal article" date="2004" name="Nat. Genet.">
        <title>Complete sequencing and characterization of 21,243 full-length human cDNAs.</title>
        <authorList>
            <person name="Ota T."/>
            <person name="Suzuki Y."/>
            <person name="Nishikawa T."/>
            <person name="Otsuki T."/>
            <person name="Sugiyama T."/>
            <person name="Irie R."/>
            <person name="Wakamatsu A."/>
            <person name="Hayashi K."/>
            <person name="Sato H."/>
            <person name="Nagai K."/>
            <person name="Kimura K."/>
            <person name="Makita H."/>
            <person name="Sekine M."/>
            <person name="Obayashi M."/>
            <person name="Nishi T."/>
            <person name="Shibahara T."/>
            <person name="Tanaka T."/>
            <person name="Ishii S."/>
            <person name="Yamamoto J."/>
            <person name="Saito K."/>
            <person name="Kawai Y."/>
            <person name="Isono Y."/>
            <person name="Nakamura Y."/>
            <person name="Nagahari K."/>
            <person name="Murakami K."/>
            <person name="Yasuda T."/>
            <person name="Iwayanagi T."/>
            <person name="Wagatsuma M."/>
            <person name="Shiratori A."/>
            <person name="Sudo H."/>
            <person name="Hosoiri T."/>
            <person name="Kaku Y."/>
            <person name="Kodaira H."/>
            <person name="Kondo H."/>
            <person name="Sugawara M."/>
            <person name="Takahashi M."/>
            <person name="Kanda K."/>
            <person name="Yokoi T."/>
            <person name="Furuya T."/>
            <person name="Kikkawa E."/>
            <person name="Omura Y."/>
            <person name="Abe K."/>
            <person name="Kamihara K."/>
            <person name="Katsuta N."/>
            <person name="Sato K."/>
            <person name="Tanikawa M."/>
            <person name="Yamazaki M."/>
            <person name="Ninomiya K."/>
            <person name="Ishibashi T."/>
            <person name="Yamashita H."/>
            <person name="Murakawa K."/>
            <person name="Fujimori K."/>
            <person name="Tanai H."/>
            <person name="Kimata M."/>
            <person name="Watanabe M."/>
            <person name="Hiraoka S."/>
            <person name="Chiba Y."/>
            <person name="Ishida S."/>
            <person name="Ono Y."/>
            <person name="Takiguchi S."/>
            <person name="Watanabe S."/>
            <person name="Yosida M."/>
            <person name="Hotuta T."/>
            <person name="Kusano J."/>
            <person name="Kanehori K."/>
            <person name="Takahashi-Fujii A."/>
            <person name="Hara H."/>
            <person name="Tanase T.-O."/>
            <person name="Nomura Y."/>
            <person name="Togiya S."/>
            <person name="Komai F."/>
            <person name="Hara R."/>
            <person name="Takeuchi K."/>
            <person name="Arita M."/>
            <person name="Imose N."/>
            <person name="Musashino K."/>
            <person name="Yuuki H."/>
            <person name="Oshima A."/>
            <person name="Sasaki N."/>
            <person name="Aotsuka S."/>
            <person name="Yoshikawa Y."/>
            <person name="Matsunawa H."/>
            <person name="Ichihara T."/>
            <person name="Shiohata N."/>
            <person name="Sano S."/>
            <person name="Moriya S."/>
            <person name="Momiyama H."/>
            <person name="Satoh N."/>
            <person name="Takami S."/>
            <person name="Terashima Y."/>
            <person name="Suzuki O."/>
            <person name="Nakagawa S."/>
            <person name="Senoh A."/>
            <person name="Mizoguchi H."/>
            <person name="Goto Y."/>
            <person name="Shimizu F."/>
            <person name="Wakebe H."/>
            <person name="Hishigaki H."/>
            <person name="Watanabe T."/>
            <person name="Sugiyama A."/>
            <person name="Takemoto M."/>
            <person name="Kawakami B."/>
            <person name="Yamazaki M."/>
            <person name="Watanabe K."/>
            <person name="Kumagai A."/>
            <person name="Itakura S."/>
            <person name="Fukuzumi Y."/>
            <person name="Fujimori Y."/>
            <person name="Komiyama M."/>
            <person name="Tashiro H."/>
            <person name="Tanigami A."/>
            <person name="Fujiwara T."/>
            <person name="Ono T."/>
            <person name="Yamada K."/>
            <person name="Fujii Y."/>
            <person name="Ozaki K."/>
            <person name="Hirao M."/>
            <person name="Ohmori Y."/>
            <person name="Kawabata A."/>
            <person name="Hikiji T."/>
            <person name="Kobatake N."/>
            <person name="Inagaki H."/>
            <person name="Ikema Y."/>
            <person name="Okamoto S."/>
            <person name="Okitani R."/>
            <person name="Kawakami T."/>
            <person name="Noguchi S."/>
            <person name="Itoh T."/>
            <person name="Shigeta K."/>
            <person name="Senba T."/>
            <person name="Matsumura K."/>
            <person name="Nakajima Y."/>
            <person name="Mizuno T."/>
            <person name="Morinaga M."/>
            <person name="Sasaki M."/>
            <person name="Togashi T."/>
            <person name="Oyama M."/>
            <person name="Hata H."/>
            <person name="Watanabe M."/>
            <person name="Komatsu T."/>
            <person name="Mizushima-Sugano J."/>
            <person name="Satoh T."/>
            <person name="Shirai Y."/>
            <person name="Takahashi Y."/>
            <person name="Nakagawa K."/>
            <person name="Okumura K."/>
            <person name="Nagase T."/>
            <person name="Nomura N."/>
            <person name="Kikuchi H."/>
            <person name="Masuho Y."/>
            <person name="Yamashita R."/>
            <person name="Nakai K."/>
            <person name="Yada T."/>
            <person name="Nakamura Y."/>
            <person name="Ohara O."/>
            <person name="Isogai T."/>
            <person name="Sugano S."/>
        </authorList>
    </citation>
    <scope>NUCLEOTIDE SEQUENCE [LARGE SCALE MRNA]</scope>
</reference>
<reference key="3">
    <citation type="journal article" date="2004" name="Genome Res.">
        <title>The status, quality, and expansion of the NIH full-length cDNA project: the Mammalian Gene Collection (MGC).</title>
        <authorList>
            <consortium name="The MGC Project Team"/>
        </authorList>
    </citation>
    <scope>NUCLEOTIDE SEQUENCE [LARGE SCALE MRNA]</scope>
    <source>
        <tissue>Lung</tissue>
    </source>
</reference>
<reference key="4">
    <citation type="journal article" date="2003" name="Genes Dev.">
        <title>Human Sin3 deacetylase and trithorax-related Set1/Ash2 histone H3-K4 methyltransferase are tethered together selectively by the cell-proliferation factor HCF-1.</title>
        <authorList>
            <person name="Wysocka J."/>
            <person name="Myers M.P."/>
            <person name="Laherty C.D."/>
            <person name="Eisenman R.N."/>
            <person name="Herr W."/>
        </authorList>
    </citation>
    <scope>INTERACTION WITH HCFC1</scope>
</reference>
<reference key="5">
    <citation type="journal article" date="2004" name="Mol. Cell">
        <title>Menin associates with a trithorax family histone methyltransferase complex and with the hoxc8 locus.</title>
        <authorList>
            <person name="Hughes C.M."/>
            <person name="Rozenblatt-Rosen O."/>
            <person name="Milne T.A."/>
            <person name="Copeland T.D."/>
            <person name="Levine S.S."/>
            <person name="Lee J.C."/>
            <person name="Hayes D.N."/>
            <person name="Shanmugam K.S."/>
            <person name="Bhattacharjee A."/>
            <person name="Biondi C.A."/>
            <person name="Kay G.F."/>
            <person name="Hayward N.K."/>
            <person name="Hess J.L."/>
            <person name="Meyerson M."/>
        </authorList>
    </citation>
    <scope>IDENTIFICATION IN THE MEN1-ASSOCIATED HISTONE METHYLTRANSFERASE COMPLEX</scope>
</reference>
<reference key="6">
    <citation type="journal article" date="2004" name="Mol. Cell. Biol.">
        <title>Leukemia proto-oncoprotein MLL forms a SET1-like histone methyltransferase complex with menin to regulate Hox gene expression.</title>
        <authorList>
            <person name="Yokoyama A."/>
            <person name="Wang Z."/>
            <person name="Wysocka J."/>
            <person name="Sanyal M."/>
            <person name="Aufiero D.J."/>
            <person name="Kitabayashi I."/>
            <person name="Herr W."/>
            <person name="Cleary M.L."/>
        </authorList>
    </citation>
    <scope>IDENTIFICATION IN THE MLL-LIKE COMPLEX</scope>
</reference>
<reference key="7">
    <citation type="journal article" date="2005" name="J. Biol. Chem.">
        <title>CpG-binding protein (CXXC finger protein 1) is a component of the mammalian Set1 histone H3-Lys4 methyltransferase complex, the analogue of the yeast Set1/COMPASS complex.</title>
        <authorList>
            <person name="Lee J.-H."/>
            <person name="Skalnik D.G."/>
        </authorList>
    </citation>
    <scope>IDENTIFICATION IN THE SET1 COMPLEX</scope>
</reference>
<reference key="8">
    <citation type="journal article" date="2005" name="Cell">
        <title>Physical association and coordinate function of the H3 K4 methyltransferase MLL1 and the H4 K16 acetyltransferase MOF.</title>
        <authorList>
            <person name="Dou Y."/>
            <person name="Milne T.A."/>
            <person name="Tackett A.J."/>
            <person name="Smith E.R."/>
            <person name="Fukuda A."/>
            <person name="Wysocka J."/>
            <person name="Allis C.D."/>
            <person name="Chait B.T."/>
            <person name="Hess J.L."/>
            <person name="Roeder R.G."/>
        </authorList>
    </citation>
    <scope>IDENTIFICATION IN THE MLL1/MLL COMPLEX</scope>
</reference>
<reference key="9">
    <citation type="journal article" date="2006" name="Proc. Natl. Acad. Sci. U.S.A.">
        <title>Coactivator as a target gene specificity determinant for histone H3 lysine 4 methyltransferases.</title>
        <authorList>
            <person name="Lee S."/>
            <person name="Lee D.K."/>
            <person name="Dou Y."/>
            <person name="Lee J."/>
            <person name="Lee B."/>
            <person name="Kwak E."/>
            <person name="Kong Y.Y."/>
            <person name="Lee S.K."/>
            <person name="Roeder R.G."/>
            <person name="Lee J.W."/>
        </authorList>
    </citation>
    <scope>IDENTIFICATION IN THE MLL2/3 (ASCOM) COMPLEX</scope>
</reference>
<reference key="10">
    <citation type="journal article" date="2007" name="J. Biol. Chem.">
        <title>Identification and characterization of the human Set1B histone H3-Lys4 methyltransferase complex.</title>
        <authorList>
            <person name="Lee J.-H."/>
            <person name="Tate C.M."/>
            <person name="You J.-S."/>
            <person name="Skalnik D.G."/>
        </authorList>
    </citation>
    <scope>SUBCELLULAR LOCATION</scope>
    <scope>IDENTIFICATION IN THE SET1 COMPLEX</scope>
</reference>
<reference key="11">
    <citation type="journal article" date="2007" name="J. Biol. Chem.">
        <title>PTIP associates with MLL3- and MLL4-containing histone H3 lysine 4 methyltransferase complex.</title>
        <authorList>
            <person name="Cho Y.-W."/>
            <person name="Hong T."/>
            <person name="Hong S."/>
            <person name="Guo H."/>
            <person name="Yu H."/>
            <person name="Kim D."/>
            <person name="Guszczynski T."/>
            <person name="Dressler G.R."/>
            <person name="Copeland T.D."/>
            <person name="Kalkum M."/>
            <person name="Ge K."/>
        </authorList>
    </citation>
    <scope>IDENTIFICATION BY MASS SPECTROMETRY</scope>
    <scope>IDENTIFICATION IN THE MLL2/3 COMPLEX</scope>
</reference>
<reference key="12">
    <citation type="journal article" date="2008" name="Mol. Cell. Biol.">
        <title>Wdr82 is a C-terminal domain-binding protein that recruits the Setd1A Histone H3-Lys4 methyltransferase complex to transcription start sites of transcribed human genes.</title>
        <authorList>
            <person name="Lee J.H."/>
            <person name="Skalnik D.G."/>
        </authorList>
    </citation>
    <scope>IDENTIFICATION IN SET1 COMPLEX</scope>
    <scope>INTERACTION WITH SETD1A</scope>
</reference>
<reference key="13">
    <citation type="journal article" date="2008" name="Mol. Cell. Biol.">
        <title>CHD8 is an ATP-dependent chromatin remodeling factor that regulates beta-catenin target genes.</title>
        <authorList>
            <person name="Thompson B.A."/>
            <person name="Tremblay V."/>
            <person name="Lin G."/>
            <person name="Bochar D.A."/>
        </authorList>
    </citation>
    <scope>IDENTIFICATION IN A COMPLEX WITH CHD8</scope>
</reference>
<reference key="14">
    <citation type="journal article" date="2008" name="Mol. Cell. Biol.">
        <title>Molecular regulation of H3K4 trimethylation by Wdr82, a component of human Set1/COMPASS.</title>
        <authorList>
            <person name="Wu M."/>
            <person name="Wang P.F."/>
            <person name="Lee J.S."/>
            <person name="Martin-Brown S."/>
            <person name="Florens L."/>
            <person name="Washburn M."/>
            <person name="Shilatifard A."/>
        </authorList>
    </citation>
    <scope>IDENTIFICATION IN SET1 COMPLEX</scope>
</reference>
<reference key="15">
    <citation type="journal article" date="2009" name="J. Biol. Chem.">
        <title>Identification and characterization of a novel nuclear protein complex involved in nuclear hormone receptor-mediated gene regulation.</title>
        <authorList>
            <person name="Garapaty S."/>
            <person name="Xu C.F."/>
            <person name="Trojer P."/>
            <person name="Mahajan M.A."/>
            <person name="Neubert T.A."/>
            <person name="Samuels H.H."/>
        </authorList>
    </citation>
    <scope>FUNCTION</scope>
    <scope>IDENTIFICATION IN A HISTONE METHYLATION COMPLEX</scope>
    <scope>INTERACTION WITH ZNF335</scope>
</reference>
<reference key="16">
    <citation type="journal article" date="2009" name="J. Biol. Chem.">
        <title>On the mechanism of multiple lysine methylation by the human mixed lineage leukemia protein-1 (MLL1) core complex.</title>
        <authorList>
            <person name="Patel A."/>
            <person name="Dharmarajan V."/>
            <person name="Vought V.E."/>
            <person name="Cosgrove M.S."/>
        </authorList>
    </citation>
    <scope>FUNCTION</scope>
    <scope>CHARACTERIZATION OF THE MLL1/MLL COMPLEX</scope>
    <scope>INTERACTION WITH KMT2A AND RBBP5</scope>
</reference>
<reference key="17">
    <citation type="journal article" date="2009" name="Mol. Cell. Biol.">
        <title>The double-histone-acetyltransferase complex ATAC is essential for mammalian development.</title>
        <authorList>
            <person name="Guelman S."/>
            <person name="Kozuka K."/>
            <person name="Mao Y."/>
            <person name="Pham V."/>
            <person name="Solloway M.J."/>
            <person name="Wang J."/>
            <person name="Wu J."/>
            <person name="Lill J.R."/>
            <person name="Zha J."/>
        </authorList>
    </citation>
    <scope>FUNCTION</scope>
    <scope>IDENTIFICATION IN ATAC COMPLEX</scope>
</reference>
<reference key="18">
    <citation type="journal article" date="2009" name="Science">
        <title>Lysine acetylation targets protein complexes and co-regulates major cellular functions.</title>
        <authorList>
            <person name="Choudhary C."/>
            <person name="Kumar C."/>
            <person name="Gnad F."/>
            <person name="Nielsen M.L."/>
            <person name="Rehman M."/>
            <person name="Walther T.C."/>
            <person name="Olsen J.V."/>
            <person name="Mann M."/>
        </authorList>
    </citation>
    <scope>ACETYLATION [LARGE SCALE ANALYSIS] AT LYS-112</scope>
    <scope>IDENTIFICATION BY MASS SPECTROMETRY [LARGE SCALE ANALYSIS]</scope>
</reference>
<reference key="19">
    <citation type="journal article" date="2010" name="J. Biol. Chem.">
        <title>Subunit composition and substrate specificity of a MOF-containing histone acetyltransferase distinct from the male-specific lethal (MSL) complex.</title>
        <authorList>
            <person name="Cai Y."/>
            <person name="Jin J."/>
            <person name="Swanson S.K."/>
            <person name="Cole M.D."/>
            <person name="Choi S.H."/>
            <person name="Florens L."/>
            <person name="Washburn M.P."/>
            <person name="Conaway J.W."/>
            <person name="Conaway R.C."/>
        </authorList>
    </citation>
    <scope>FUNCTION IN HISTONE H4 ACETYLATION</scope>
    <scope>IDENTIFICATION IN NSL COMPLEX</scope>
    <scope>SUBCELLULAR LOCATION</scope>
</reference>
<reference key="20">
    <citation type="journal article" date="2011" name="BMC Syst. Biol.">
        <title>Initial characterization of the human central proteome.</title>
        <authorList>
            <person name="Burkard T.R."/>
            <person name="Planyavsky M."/>
            <person name="Kaupe I."/>
            <person name="Breitwieser F.P."/>
            <person name="Buerckstuemmer T."/>
            <person name="Bennett K.L."/>
            <person name="Superti-Furga G."/>
            <person name="Colinge J."/>
        </authorList>
    </citation>
    <scope>IDENTIFICATION BY MASS SPECTROMETRY [LARGE SCALE ANALYSIS]</scope>
</reference>
<reference key="21">
    <citation type="journal article" date="2012" name="Cell">
        <title>Microcephaly gene links trithorax and REST/NRSF to control neural stem cell proliferation and differentiation.</title>
        <authorList>
            <person name="Yang Y.J."/>
            <person name="Baltus A.E."/>
            <person name="Mathew R.S."/>
            <person name="Murphy E.A."/>
            <person name="Evrony G.D."/>
            <person name="Gonzalez D.M."/>
            <person name="Wang E.P."/>
            <person name="Marshall-Walker C.A."/>
            <person name="Barry B.J."/>
            <person name="Murn J."/>
            <person name="Tatarakis A."/>
            <person name="Mahajan M.A."/>
            <person name="Samuels H.H."/>
            <person name="Shi Y."/>
            <person name="Golden J.A."/>
            <person name="Mahajnah M."/>
            <person name="Shenhav R."/>
            <person name="Walsh C.A."/>
        </authorList>
    </citation>
    <scope>INTERACTION WITH ZNF335</scope>
</reference>
<reference key="22">
    <citation type="journal article" date="2012" name="Proc. Natl. Acad. Sci. U.S.A.">
        <title>N-terminal acetylome analyses and functional insights of the N-terminal acetyltransferase NatB.</title>
        <authorList>
            <person name="Van Damme P."/>
            <person name="Lasa M."/>
            <person name="Polevoda B."/>
            <person name="Gazquez C."/>
            <person name="Elosegui-Artola A."/>
            <person name="Kim D.S."/>
            <person name="De Juan-Pardo E."/>
            <person name="Demeyer K."/>
            <person name="Hole K."/>
            <person name="Larrea E."/>
            <person name="Timmerman E."/>
            <person name="Prieto J."/>
            <person name="Arnesen T."/>
            <person name="Sherman F."/>
            <person name="Gevaert K."/>
            <person name="Aldabe R."/>
        </authorList>
    </citation>
    <scope>ACETYLATION [LARGE SCALE ANALYSIS] AT ALA-2</scope>
    <scope>CLEAVAGE OF INITIATOR METHIONINE [LARGE SCALE ANALYSIS]</scope>
    <scope>IDENTIFICATION BY MASS SPECTROMETRY [LARGE SCALE ANALYSIS]</scope>
</reference>
<reference key="23">
    <citation type="journal article" date="2017" name="Nat. Struct. Mol. Biol.">
        <title>Site-specific mapping of the human SUMO proteome reveals co-modification with phosphorylation.</title>
        <authorList>
            <person name="Hendriks I.A."/>
            <person name="Lyon D."/>
            <person name="Young C."/>
            <person name="Jensen L.J."/>
            <person name="Vertegaal A.C."/>
            <person name="Nielsen M.L."/>
        </authorList>
    </citation>
    <scope>SUMOYLATION [LARGE SCALE ANALYSIS] AT LYS-7; LYS-27 AND LYS-46</scope>
    <scope>IDENTIFICATION BY MASS SPECTROMETRY [LARGE SCALE ANALYSIS]</scope>
</reference>
<reference key="24">
    <citation type="journal article" date="2021" name="Nucleic Acids Res.">
        <title>MLL1 is regulated by KSHV LANA and is important for virus latency.</title>
        <authorList>
            <person name="Tan M."/>
            <person name="Li S."/>
            <person name="Juillard F."/>
            <person name="Chitas R."/>
            <person name="Custodio T.F."/>
            <person name="Xue H."/>
            <person name="Szymula A."/>
            <person name="Sun Q."/>
            <person name="Liu B."/>
            <person name="Alvarez A.L."/>
            <person name="Chen S."/>
            <person name="Huang J."/>
            <person name="Simas J.P."/>
            <person name="McVey C.E."/>
            <person name="Kaye K.M."/>
        </authorList>
    </citation>
    <scope>INTERACTION WITH HUMAN HERPESVIRUS 8/HHV-8 PROTEIN LANA1</scope>
    <scope>SUBCELLULAR LOCATION</scope>
</reference>
<reference key="25">
    <citation type="journal article" date="2006" name="EMBO J.">
        <title>Structural basis for molecular recognition and presentation of histone H3 by WDR5.</title>
        <authorList>
            <person name="Schuetz A."/>
            <person name="Allali-Hassani A."/>
            <person name="Martin F."/>
            <person name="Loppnau P."/>
            <person name="Vedadi M."/>
            <person name="Bochkarev A."/>
            <person name="Plotnikov A.N."/>
            <person name="Arrowsmith C.H."/>
            <person name="Min J."/>
        </authorList>
    </citation>
    <scope>X-RAY CRYSTALLOGRAPHY (1.75 ANGSTROMS) IN COMPLEX WITH HISTONE H3 PEPTIDE</scope>
    <scope>INTERACTION WITH HISTONE H3</scope>
</reference>
<reference key="26">
    <citation type="journal article" date="2006" name="Mol. Cell">
        <title>Structural basis for the specific recognition of methylated histone H3 lysine 4 by the WD-40 protein WDR5.</title>
        <authorList>
            <person name="Han Z."/>
            <person name="Guo L."/>
            <person name="Wang H."/>
            <person name="Shen Y."/>
            <person name="Deng X.W."/>
            <person name="Chai J."/>
        </authorList>
    </citation>
    <scope>X-RAY CRYSTALLOGRAPHY (1.90 ANGSTROMS) OF 27-334 IN COMPLEX WITH HISTONE H3 PEPTIDE</scope>
    <scope>INTERACTION WITH HISTONE H3</scope>
    <scope>MUTAGENESIS OF ALA-47; SER-91; ASP-107; PHE-133 AND GLU-322</scope>
    <scope>FUNCTION</scope>
</reference>
<reference key="27">
    <citation type="journal article" date="2006" name="Nat. Struct. Mol. Biol.">
        <title>Molecular recognition of histone H3 by the WD40 protein WDR5.</title>
        <authorList>
            <person name="Couture J.F."/>
            <person name="Collazo E."/>
            <person name="Trievel R.C."/>
        </authorList>
    </citation>
    <scope>X-RAY CRYSTALLOGRAPHY (1.48 ANGSTROMS) OF 22-334 IN COMPLEX WITH HISTONE H3 PEPTIDE</scope>
    <scope>INTERACTION WITH HISTONE H3</scope>
    <scope>MUTAGENESIS OF ASP-107; PHE-133; PHE-263 AND LEU-321</scope>
    <scope>FUNCTION</scope>
</reference>
<reference key="28">
    <citation type="journal article" date="2006" name="Nat. Struct. Mol. Biol.">
        <title>Histone H3 recognition and presentation by the WDR5 module of the MLL1 complex.</title>
        <authorList>
            <person name="Ruthenburg A.J."/>
            <person name="Wang W."/>
            <person name="Graybosch D.M."/>
            <person name="Li H."/>
            <person name="Allis C.D."/>
            <person name="Patel D.J."/>
            <person name="Verdine G.L."/>
        </authorList>
    </citation>
    <scope>X-RAY CRYSTALLOGRAPHY (1.50 ANGSTROMS) OF 20-334 IN COMPLEX WITH HISTONE H3 PEPTIDE</scope>
    <scope>INTERACTION WITH HISTONE H3</scope>
</reference>
<reference key="29">
    <citation type="journal article" date="2008" name="J. Biol. Chem.">
        <title>Structure of WDR5 bound to mixed lineage leukemia protein-1 peptide.</title>
        <authorList>
            <person name="Patel A."/>
            <person name="Dharmarajan V."/>
            <person name="Cosgrove M.S."/>
        </authorList>
    </citation>
    <scope>X-RAY CRYSTALLOGRAPHY (1.72 ANGSTROMS) OF 23-334 IN COMPLEX WITH KMT2A</scope>
</reference>
<reference evidence="32" key="30">
    <citation type="journal article" date="2008" name="J. Biol. Chem.">
        <title>WDR5 interacts with mixed lineage leukemia (MLL) protein via the histone H3-binding pocket.</title>
        <authorList>
            <person name="Song J.J."/>
            <person name="Kingston R.E."/>
        </authorList>
    </citation>
    <scope>X-RAY CRYSTALLOGRAPHY (1.37 ANGSTROMS) OF 25-334 IN COMPLEX WITH KMT2A</scope>
    <scope>FUNCTION</scope>
    <scope>INTERACTION WITH KMT2A AND KMT2B</scope>
    <scope>MUTAGENESIS OF ASP-107; PHE-133; PHE-149; PHE-263 AND GLU-322</scope>
</reference>
<reference evidence="33" key="31">
    <citation type="journal article" date="2011" name="Structure">
        <title>Structural and biochemical insights into MLL1 core complex assembly.</title>
        <authorList>
            <person name="Avdic V."/>
            <person name="Zhang P."/>
            <person name="Lanouette S."/>
            <person name="Groulx A."/>
            <person name="Tremblay V."/>
            <person name="Brunzelle J."/>
            <person name="Couture J.F."/>
        </authorList>
    </citation>
    <scope>X-RAY CRYSTALLOGRAPHY (2.35 ANGSTROMS) OF 22-334 IN COMPLEX WITH KMT2A AND RBBP5</scope>
    <scope>FUNCTION</scope>
    <scope>INTERACTION WITH RBBP5</scope>
    <scope>MUTAGENESIS OF ASN-225; LEU-240 AND GLN-289</scope>
</reference>
<reference evidence="39 40 41 42 43 44" key="32">
    <citation type="journal article" date="2012" name="J. Biol. Chem.">
        <title>Structural basis for WDR5 interaction (Win) motif recognition in human SET1 family histone methyltransferases.</title>
        <authorList>
            <person name="Dharmarajan V."/>
            <person name="Lee J.H."/>
            <person name="Patel A."/>
            <person name="Skalnik D.G."/>
            <person name="Cosgrove M.S."/>
        </authorList>
    </citation>
    <scope>X-RAY CRYSTALLOGRAPHY (1.30 ANGSTROMS) OF 23-334 IN COMPLEX WITH KMT2A; KMT2B; KMT2C; KMT2D; SETD1A AND SETD1B</scope>
    <scope>INTERACTION WITH KMT2A; KMT2B; KMT2C; KMT2D; SETD1A AND SETD1B</scope>
</reference>
<reference evidence="34 35 36 37 38" key="33">
    <citation type="journal article" date="2012" name="Nucleic Acids Res.">
        <title>The plasticity of WDR5 peptide-binding cleft enables the binding of the SET1 family of histone methyltransferases.</title>
        <authorList>
            <person name="Zhang P."/>
            <person name="Lee H."/>
            <person name="Brunzelle J.S."/>
            <person name="Couture J.F."/>
        </authorList>
    </citation>
    <scope>X-RAY CRYSTALLOGRAPHY (1.40 ANGSTROMS) OF 21-334 IN COMPLEX WITH KMT2B; KMT2C; KMT2D; SETD1A AND SETD1B</scope>
    <scope>INTERACTION WITH KMT2B; KMT2C; KMT2D; SETD1A AND SETD1B</scope>
    <scope>FUNCTION</scope>
</reference>
<reference key="34">
    <citation type="journal article" date="2019" name="Mol. Psychiatry">
        <title>A set of regulatory genes co-expressed in embryonic human brain is implicated in disrupted speech development.</title>
        <authorList>
            <person name="Eising E."/>
            <person name="Carrion-Castillo A."/>
            <person name="Vino A."/>
            <person name="Strand E.A."/>
            <person name="Jakielski K.J."/>
            <person name="Scerri T.S."/>
            <person name="Hildebrand M.S."/>
            <person name="Webster R."/>
            <person name="Ma A."/>
            <person name="Mazoyer B."/>
            <person name="Francks C."/>
            <person name="Bahlo M."/>
            <person name="Scheffer I.E."/>
            <person name="Morgan A.T."/>
            <person name="Shriberg L.D."/>
            <person name="Fisher S.E."/>
        </authorList>
    </citation>
    <scope>VARIANT MET-208</scope>
</reference>
<protein>
    <recommendedName>
        <fullName>WD repeat-containing protein 5</fullName>
    </recommendedName>
    <alternativeName>
        <fullName>BMP2-induced 3-kb gene protein</fullName>
    </alternativeName>
</protein>
<accession>P61964</accession>
<accession>Q91VA5</accession>
<accession>Q9NWX7</accession>
<accession>Q9UGP9</accession>
<name>WDR5_HUMAN</name>
<keyword id="KW-0002">3D-structure</keyword>
<keyword id="KW-0007">Acetylation</keyword>
<keyword id="KW-0156">Chromatin regulator</keyword>
<keyword id="KW-0945">Host-virus interaction</keyword>
<keyword id="KW-1017">Isopeptide bond</keyword>
<keyword id="KW-0539">Nucleus</keyword>
<keyword id="KW-1267">Proteomics identification</keyword>
<keyword id="KW-1185">Reference proteome</keyword>
<keyword id="KW-0677">Repeat</keyword>
<keyword id="KW-0804">Transcription</keyword>
<keyword id="KW-0805">Transcription regulation</keyword>
<keyword id="KW-0832">Ubl conjugation</keyword>
<keyword id="KW-0853">WD repeat</keyword>